<evidence type="ECO:0000250" key="1">
    <source>
        <dbReference type="UniProtKB" id="P18266"/>
    </source>
</evidence>
<evidence type="ECO:0000250" key="2">
    <source>
        <dbReference type="UniProtKB" id="Q9WV60"/>
    </source>
</evidence>
<evidence type="ECO:0000255" key="3">
    <source>
        <dbReference type="PROSITE-ProRule" id="PRU00159"/>
    </source>
</evidence>
<evidence type="ECO:0000256" key="4">
    <source>
        <dbReference type="SAM" id="MobiDB-lite"/>
    </source>
</evidence>
<evidence type="ECO:0000269" key="5">
    <source>
    </source>
</evidence>
<evidence type="ECO:0000269" key="6">
    <source>
    </source>
</evidence>
<evidence type="ECO:0000269" key="7">
    <source>
    </source>
</evidence>
<evidence type="ECO:0000269" key="8">
    <source>
    </source>
</evidence>
<evidence type="ECO:0000269" key="9">
    <source>
    </source>
</evidence>
<evidence type="ECO:0000269" key="10">
    <source>
    </source>
</evidence>
<evidence type="ECO:0000269" key="11">
    <source>
    </source>
</evidence>
<evidence type="ECO:0000269" key="12">
    <source>
    </source>
</evidence>
<evidence type="ECO:0000269" key="13">
    <source>
    </source>
</evidence>
<evidence type="ECO:0000269" key="14">
    <source>
    </source>
</evidence>
<evidence type="ECO:0000269" key="15">
    <source>
    </source>
</evidence>
<evidence type="ECO:0000269" key="16">
    <source>
    </source>
</evidence>
<evidence type="ECO:0000269" key="17">
    <source>
    </source>
</evidence>
<evidence type="ECO:0000269" key="18">
    <source>
    </source>
</evidence>
<evidence type="ECO:0000269" key="19">
    <source>
    </source>
</evidence>
<evidence type="ECO:0000269" key="20">
    <source>
    </source>
</evidence>
<evidence type="ECO:0000269" key="21">
    <source>
    </source>
</evidence>
<evidence type="ECO:0000269" key="22">
    <source>
    </source>
</evidence>
<evidence type="ECO:0000269" key="23">
    <source>
    </source>
</evidence>
<evidence type="ECO:0000269" key="24">
    <source>
    </source>
</evidence>
<evidence type="ECO:0000269" key="25">
    <source>
    </source>
</evidence>
<evidence type="ECO:0000269" key="26">
    <source>
    </source>
</evidence>
<evidence type="ECO:0000269" key="27">
    <source>
    </source>
</evidence>
<evidence type="ECO:0000269" key="28">
    <source>
    </source>
</evidence>
<evidence type="ECO:0000269" key="29">
    <source>
    </source>
</evidence>
<evidence type="ECO:0000269" key="30">
    <source>
    </source>
</evidence>
<evidence type="ECO:0000269" key="31">
    <source>
    </source>
</evidence>
<evidence type="ECO:0000269" key="32">
    <source>
    </source>
</evidence>
<evidence type="ECO:0000269" key="33">
    <source>
    </source>
</evidence>
<evidence type="ECO:0000269" key="34">
    <source>
    </source>
</evidence>
<evidence type="ECO:0000269" key="35">
    <source>
    </source>
</evidence>
<evidence type="ECO:0000269" key="36">
    <source>
    </source>
</evidence>
<evidence type="ECO:0000269" key="37">
    <source>
    </source>
</evidence>
<evidence type="ECO:0000269" key="38">
    <source>
    </source>
</evidence>
<evidence type="ECO:0000269" key="39">
    <source>
    </source>
</evidence>
<evidence type="ECO:0000269" key="40">
    <source>
    </source>
</evidence>
<evidence type="ECO:0000269" key="41">
    <source>
    </source>
</evidence>
<evidence type="ECO:0000269" key="42">
    <source>
    </source>
</evidence>
<evidence type="ECO:0000269" key="43">
    <source>
    </source>
</evidence>
<evidence type="ECO:0000269" key="44">
    <source>
    </source>
</evidence>
<evidence type="ECO:0000269" key="45">
    <source>
    </source>
</evidence>
<evidence type="ECO:0000269" key="46">
    <source>
    </source>
</evidence>
<evidence type="ECO:0000269" key="47">
    <source>
    </source>
</evidence>
<evidence type="ECO:0000269" key="48">
    <source>
    </source>
</evidence>
<evidence type="ECO:0000269" key="49">
    <source>
    </source>
</evidence>
<evidence type="ECO:0000269" key="50">
    <source>
    </source>
</evidence>
<evidence type="ECO:0000269" key="51">
    <source>
    </source>
</evidence>
<evidence type="ECO:0000269" key="52">
    <source>
    </source>
</evidence>
<evidence type="ECO:0000269" key="53">
    <source>
    </source>
</evidence>
<evidence type="ECO:0000269" key="54">
    <source>
    </source>
</evidence>
<evidence type="ECO:0000269" key="55">
    <source>
    </source>
</evidence>
<evidence type="ECO:0000269" key="56">
    <source>
    </source>
</evidence>
<evidence type="ECO:0000303" key="57">
    <source>
    </source>
</evidence>
<evidence type="ECO:0000305" key="58"/>
<evidence type="ECO:0000305" key="59">
    <source>
    </source>
</evidence>
<evidence type="ECO:0000305" key="60">
    <source>
    </source>
</evidence>
<evidence type="ECO:0000305" key="61">
    <source>
    </source>
</evidence>
<evidence type="ECO:0000305" key="62">
    <source>
    </source>
</evidence>
<evidence type="ECO:0000312" key="63">
    <source>
        <dbReference type="HGNC" id="HGNC:4617"/>
    </source>
</evidence>
<evidence type="ECO:0007744" key="64">
    <source>
    </source>
</evidence>
<evidence type="ECO:0007744" key="65">
    <source>
    </source>
</evidence>
<evidence type="ECO:0007744" key="66">
    <source>
    </source>
</evidence>
<evidence type="ECO:0007829" key="67">
    <source>
        <dbReference type="PDB" id="1J1B"/>
    </source>
</evidence>
<evidence type="ECO:0007829" key="68">
    <source>
        <dbReference type="PDB" id="1Q5K"/>
    </source>
</evidence>
<evidence type="ECO:0007829" key="69">
    <source>
        <dbReference type="PDB" id="1UV5"/>
    </source>
</evidence>
<evidence type="ECO:0007829" key="70">
    <source>
        <dbReference type="PDB" id="2JDO"/>
    </source>
</evidence>
<evidence type="ECO:0007829" key="71">
    <source>
        <dbReference type="PDB" id="4ACC"/>
    </source>
</evidence>
<evidence type="ECO:0007829" key="72">
    <source>
        <dbReference type="PDB" id="4NM5"/>
    </source>
</evidence>
<evidence type="ECO:0007829" key="73">
    <source>
        <dbReference type="PDB" id="6HK4"/>
    </source>
</evidence>
<evidence type="ECO:0007829" key="74">
    <source>
        <dbReference type="PDB" id="7B6F"/>
    </source>
</evidence>
<evidence type="ECO:0007829" key="75">
    <source>
        <dbReference type="PDB" id="7SXJ"/>
    </source>
</evidence>
<reference key="1">
    <citation type="journal article" date="1994" name="Biochem. J.">
        <title>Mitogen inactivation of glycogen synthase kinase-3 beta in intact cells via serine 9 phosphorylation.</title>
        <authorList>
            <person name="Stambolic V."/>
            <person name="Woodgett J.R."/>
        </authorList>
    </citation>
    <scope>NUCLEOTIDE SEQUENCE [MRNA] (ISOFORM 1)</scope>
    <scope>MUTAGENESIS OF SER-9</scope>
</reference>
<reference key="2">
    <citation type="submission" date="2005-09" db="EMBL/GenBank/DDBJ databases">
        <authorList>
            <person name="Mural R.J."/>
            <person name="Istrail S."/>
            <person name="Sutton G.G."/>
            <person name="Florea L."/>
            <person name="Halpern A.L."/>
            <person name="Mobarry C.M."/>
            <person name="Lippert R."/>
            <person name="Walenz B."/>
            <person name="Shatkay H."/>
            <person name="Dew I."/>
            <person name="Miller J.R."/>
            <person name="Flanigan M.J."/>
            <person name="Edwards N.J."/>
            <person name="Bolanos R."/>
            <person name="Fasulo D."/>
            <person name="Halldorsson B.V."/>
            <person name="Hannenhalli S."/>
            <person name="Turner R."/>
            <person name="Yooseph S."/>
            <person name="Lu F."/>
            <person name="Nusskern D.R."/>
            <person name="Shue B.C."/>
            <person name="Zheng X.H."/>
            <person name="Zhong F."/>
            <person name="Delcher A.L."/>
            <person name="Huson D.H."/>
            <person name="Kravitz S.A."/>
            <person name="Mouchard L."/>
            <person name="Reinert K."/>
            <person name="Remington K.A."/>
            <person name="Clark A.G."/>
            <person name="Waterman M.S."/>
            <person name="Eichler E.E."/>
            <person name="Adams M.D."/>
            <person name="Hunkapiller M.W."/>
            <person name="Myers E.W."/>
            <person name="Venter J.C."/>
        </authorList>
    </citation>
    <scope>NUCLEOTIDE SEQUENCE [LARGE SCALE GENOMIC DNA]</scope>
</reference>
<reference key="3">
    <citation type="journal article" date="2004" name="Genome Res.">
        <title>The status, quality, and expansion of the NIH full-length cDNA project: the Mammalian Gene Collection (MGC).</title>
        <authorList>
            <consortium name="The MGC Project Team"/>
        </authorList>
    </citation>
    <scope>NUCLEOTIDE SEQUENCE [LARGE SCALE MRNA] (ISOFORMS 1 AND 2)</scope>
    <source>
        <tissue>Eye</tissue>
        <tissue>Placenta</tissue>
    </source>
</reference>
<reference key="4">
    <citation type="journal article" date="1999" name="Genomics">
        <title>Molecular cloning and characterization of the human glycogen synthase kinase-3beta promoter.</title>
        <authorList>
            <person name="Lau K.F."/>
            <person name="Miller C.C.J."/>
            <person name="Anderton B.H."/>
            <person name="Shaw P.C."/>
        </authorList>
    </citation>
    <scope>NUCLEOTIDE SEQUENCE [GENOMIC DNA] OF 1-28</scope>
</reference>
<reference key="5">
    <citation type="journal article" date="1999" name="Mol. Psychiatry">
        <title>Radiation hybrid mapping of genes in the lithium-sensitive wnt signaling pathway.</title>
        <authorList>
            <person name="Rhoads A.R."/>
            <person name="Karkera J.D."/>
            <person name="Detera-Wadleigh S.D."/>
        </authorList>
    </citation>
    <scope>NUCLEOTIDE SEQUENCE [GENOMIC DNA] OF 185-202</scope>
</reference>
<reference key="6">
    <citation type="journal article" date="1991" name="Cell">
        <title>Activation of protein kinase C decreases phosphorylation of c-Jun at sites that negatively regulate its DNA-binding activity.</title>
        <authorList>
            <person name="Boyle W.J."/>
            <person name="Smeal T."/>
            <person name="Defize L.H."/>
            <person name="Angel P."/>
            <person name="Woodgett J.R."/>
            <person name="Karin M."/>
            <person name="Hunter T."/>
        </authorList>
    </citation>
    <scope>FUNCTION IN PHOSPHORYLATION OF JUN</scope>
</reference>
<reference key="7">
    <citation type="journal article" date="1993" name="Biochem. J.">
        <title>Glycogen synthase kinase-3 is rapidly inactivated in response to insulin and phosphorylates eukaryotic initiation factor eIF-2B.</title>
        <authorList>
            <person name="Welsh G.I."/>
            <person name="Proud C.G."/>
        </authorList>
    </citation>
    <scope>FUNCTION IN PHOSPHORYLATION OF EIF2BE/EIF2B5</scope>
</reference>
<reference key="8">
    <citation type="journal article" date="1993" name="Biochem. J.">
        <title>Inactivation of glycogen synthase kinase-3 beta by phosphorylation: new kinase connections in insulin and growth-factor signalling.</title>
        <authorList>
            <person name="Sutherland C."/>
            <person name="Leighton I.A."/>
            <person name="Cohen P."/>
        </authorList>
    </citation>
    <scope>PHOSPHORYLATION AT SER-9</scope>
</reference>
<reference key="9">
    <citation type="journal article" date="1995" name="Nature">
        <title>Inhibition of glycogen synthase kinase-3 by insulin mediated by protein kinase B.</title>
        <authorList>
            <person name="Cross D.A."/>
            <person name="Alessi D.R."/>
            <person name="Cohen P."/>
            <person name="Andjelkovich M."/>
            <person name="Hemmings B.A."/>
        </authorList>
    </citation>
    <scope>ACTIVITY REGULATION BY AKT1</scope>
</reference>
<reference key="10">
    <citation type="journal article" date="1997" name="Science">
        <title>Nuclear export of NF-ATc enhanced by glycogen synthase kinase-3.</title>
        <authorList>
            <person name="Beals C.R."/>
            <person name="Sheridan C.M."/>
            <person name="Turck C.W."/>
            <person name="Gardner P."/>
            <person name="Crabtree G.R."/>
        </authorList>
    </citation>
    <scope>FUNCTION IN PHOSPHORYLATION OF NFATC1/NFATC</scope>
</reference>
<reference key="11">
    <citation type="journal article" date="1998" name="Biochem. Biophys. Res. Commun.">
        <title>Human dynamin-like protein interacts with the glycogen synthase kinase 3beta.</title>
        <authorList>
            <person name="Hong Y.-R."/>
            <person name="Chen C.-H."/>
            <person name="Cheng D.-S."/>
            <person name="Howng S.-L."/>
            <person name="Chow C.-C."/>
        </authorList>
    </citation>
    <scope>INTERACTION WITH DNM1L</scope>
    <source>
        <tissue>Liver</tissue>
    </source>
</reference>
<reference key="12">
    <citation type="journal article" date="1998" name="Mol. Cell. Biol.">
        <title>Interaction of glycogen synthase kinase 3beta with the DF3/MUC1 carcinoma-associated antigen and beta-catenin.</title>
        <authorList>
            <person name="Li Y."/>
            <person name="Bharti A."/>
            <person name="Chen D."/>
            <person name="Gong J."/>
            <person name="Kufe D."/>
        </authorList>
    </citation>
    <scope>INTERACTION WITH MUC1</scope>
    <scope>FUNCTION</scope>
</reference>
<reference key="13">
    <citation type="journal article" date="1998" name="Proc. Natl. Acad. Sci. U.S.A.">
        <title>Phosphoinositide-3-OH kinase-dependent regulation of glycogen synthase kinase 3 and protein kinase B/AKT by the integrin-linked kinase.</title>
        <authorList>
            <person name="Delcommenne M."/>
            <person name="Tan C."/>
            <person name="Gray V."/>
            <person name="Rue L."/>
            <person name="Woodgett J.R."/>
            <person name="Dedhar S."/>
        </authorList>
    </citation>
    <scope>CHARACTERIZATION</scope>
</reference>
<reference key="14">
    <citation type="journal article" date="2000" name="Biochim. Biophys. Acta">
        <title>Cloning and characterization of a novel human ninein protein that interacts with the glycogen synthase kinase 3beta.</title>
        <authorList>
            <person name="Hong Y.-R."/>
            <person name="Chen C.-H."/>
            <person name="Chang J.-H."/>
            <person name="Wang S.-K."/>
            <person name="Sy W.-D."/>
            <person name="Chou C.-K."/>
            <person name="Howng S.-L."/>
        </authorList>
    </citation>
    <scope>INTERACTION WITH NIN</scope>
</reference>
<reference key="15">
    <citation type="journal article" date="2000" name="Diabetes">
        <title>Potential role of glycogen synthase kinase-3 in skeletal muscle insulin resistance of type 2 diabetes.</title>
        <authorList>
            <person name="Nikoulina S.E."/>
            <person name="Ciaraldi T.P."/>
            <person name="Mudaliar S."/>
            <person name="Mohideen P."/>
            <person name="Carter L."/>
            <person name="Henry R.R."/>
        </authorList>
    </citation>
    <scope>ASSOCIATION WITH DIABETES MELLITUS</scope>
</reference>
<reference key="16">
    <citation type="journal article" date="2001" name="Mol. Cell">
        <title>A common phosphate binding site explains the unique substrate specificity of GSK3 and its inactivation by phosphorylation.</title>
        <authorList>
            <person name="Frame S."/>
            <person name="Cohen P."/>
            <person name="Biondi R.M."/>
        </authorList>
    </citation>
    <scope>FUNCTION</scope>
    <scope>MUTAGENESIS OF ARG-96 AND LEU-128</scope>
</reference>
<reference key="17">
    <citation type="journal article" date="2002" name="Biochem. Biophys. Res. Commun.">
        <title>Human serum and glucocorticoid-inducible kinase-like kinase (SGKL) phosphorylates glycogen syntheses kinase 3 beta (GSK-3beta) at serine-9 through direct interaction.</title>
        <authorList>
            <person name="Dai F."/>
            <person name="Yu L."/>
            <person name="He H."/>
            <person name="Chen Y."/>
            <person name="Yu J."/>
            <person name="Yang Y."/>
            <person name="Xu Y."/>
            <person name="Ling W."/>
            <person name="Zhao S."/>
        </authorList>
    </citation>
    <scope>PHOSPHORYLATION AT SER-9 BY SGK3</scope>
    <scope>INTERACTION WITH SGK3</scope>
</reference>
<reference key="18">
    <citation type="journal article" date="2004" name="J. Neurochem.">
        <title>Primed phosphorylation of tau at Thr231 by glycogen synthase kinase 3beta (GSK3beta) plays a critical role in regulating tau's ability to bind and stabilize microtubules.</title>
        <authorList>
            <person name="Cho J.H."/>
            <person name="Johnson G.V."/>
        </authorList>
    </citation>
    <scope>FUNCTION IN PHOSPHORYLATION OF MAPT/TAU</scope>
</reference>
<reference key="19">
    <citation type="journal article" date="2004" name="Nat. Cell Biol.">
        <title>Dual regulation of Snail by GSK-3beta-mediated phosphorylation in control of epithelial-mesenchymal transition.</title>
        <authorList>
            <person name="Zhou B.P."/>
            <person name="Deng J."/>
            <person name="Xia W."/>
            <person name="Xu J."/>
            <person name="Li Y.M."/>
            <person name="Gunduz M."/>
            <person name="Hung M.C."/>
        </authorList>
    </citation>
    <scope>FUNCTION</scope>
    <scope>INTERACTION WITH SNAI1</scope>
    <scope>SUBCELLULAR LOCATION</scope>
</reference>
<reference key="20">
    <citation type="journal article" date="2005" name="Biochem. Biophys. Res. Commun.">
        <title>Characterization of two non-testis-specific CABYR variants that bind to GSK3beta with a proline-rich extensin-like domain.</title>
        <authorList>
            <person name="Hsu H.-C."/>
            <person name="Lee Y.-L."/>
            <person name="Cheng T.-S."/>
            <person name="Howng S.-L."/>
            <person name="Chang L.-K."/>
            <person name="Lu P.-J."/>
            <person name="Hong Y.-R."/>
        </authorList>
    </citation>
    <scope>INTERACTION WITH CABYR</scope>
</reference>
<reference key="21">
    <citation type="journal article" date="2005" name="J. Biol. Chem.">
        <title>Wnt-dependent regulation of the E-cadherin repressor snail.</title>
        <authorList>
            <person name="Yook J.I."/>
            <person name="Li X.Y."/>
            <person name="Ota I."/>
            <person name="Fearon E.R."/>
            <person name="Weiss S.J."/>
        </authorList>
    </citation>
    <scope>FUNCTION</scope>
    <scope>INTERACTION WITH SNAI1</scope>
</reference>
<reference key="22">
    <citation type="journal article" date="2006" name="Biochemistry">
        <title>GSKIP is homologous to the axin GSK3beta interaction domain and functions as a negative regulator of GSK3beta.</title>
        <authorList>
            <person name="Chou H.-Y."/>
            <person name="Howng S.-L."/>
            <person name="Cheng T.-S."/>
            <person name="Hsiao Y.-L."/>
            <person name="Lieu A.-S."/>
            <person name="Loh J.-K."/>
            <person name="Hwang S.-L."/>
            <person name="Lin C.-C."/>
            <person name="Hsu C.-M."/>
            <person name="Wang C."/>
            <person name="Lee C.-I."/>
            <person name="Lu P.-J."/>
            <person name="Chou C.-K."/>
            <person name="Huang C.-Y."/>
            <person name="Hong Y.-R."/>
        </authorList>
    </citation>
    <scope>INTERACTION WITH GSKIP</scope>
</reference>
<reference key="23">
    <citation type="journal article" date="2006" name="Mol. Cell. Biol.">
        <title>Glycogen synthase kinase 3 and h-prune regulate cell migration by modulating focal adhesions.</title>
        <authorList>
            <person name="Kobayashi T."/>
            <person name="Hino S."/>
            <person name="Oue N."/>
            <person name="Asahara T."/>
            <person name="Zollo M."/>
            <person name="Yasui W."/>
            <person name="Kikuchi A."/>
        </authorList>
    </citation>
    <scope>INTERACTION WITH PRUNE1</scope>
</reference>
<reference key="24">
    <citation type="journal article" date="2006" name="Science">
        <title>Nuclear receptor Rev-erbalpha is a critical lithium-sensitive component of the circadian clock.</title>
        <authorList>
            <person name="Yin L."/>
            <person name="Wang J."/>
            <person name="Klein P.S."/>
            <person name="Lazar M.A."/>
        </authorList>
    </citation>
    <scope>FUNCTION</scope>
    <scope>PHOSPHORYLATION AT SER-9</scope>
</reference>
<reference key="25">
    <citation type="journal article" date="2007" name="Biochim. Biophys. Acta">
        <title>Glycogen synthase kinase-3beta binds to E2F1 and regulates its transcriptional activity.</title>
        <authorList>
            <person name="Garcia-Alvarez G."/>
            <person name="Ventura V."/>
            <person name="Ros O."/>
            <person name="Aligue R."/>
            <person name="Gil J."/>
            <person name="Tauler A."/>
        </authorList>
    </citation>
    <scope>FUNCTION</scope>
    <scope>CATALYTIC ACTIVITY</scope>
    <scope>MUTAGENESIS OF SER-9 AND 85-LYS-LYS-86</scope>
</reference>
<reference key="26">
    <citation type="journal article" date="2007" name="EMBO J.">
        <title>Protein phosphatase 1 regulates assembly and function of the beta-catenin degradation complex.</title>
        <authorList>
            <person name="Luo W."/>
            <person name="Peterson A."/>
            <person name="Garcia B.A."/>
            <person name="Coombs G."/>
            <person name="Kofahl B."/>
            <person name="Heinrich R."/>
            <person name="Shabanowitz J."/>
            <person name="Hunt D.F."/>
            <person name="Yost H.J."/>
            <person name="Virshup D.M."/>
        </authorList>
    </citation>
    <scope>INTERACTION WITH AXIN1</scope>
</reference>
<reference key="27">
    <citation type="journal article" date="2008" name="Cell Death Differ.">
        <title>Identification of an antiapoptotic protein complex at death receptors.</title>
        <authorList>
            <person name="Sun M."/>
            <person name="Song L."/>
            <person name="Li Y."/>
            <person name="Zhou T."/>
            <person name="Jope R.S."/>
        </authorList>
    </citation>
    <scope>FUNCTION</scope>
    <scope>INTERACTION WITH BIRC2; DDX3X AND TNFRSF10B</scope>
</reference>
<reference key="28">
    <citation type="journal article" date="2008" name="J. Cell. Biochem.">
        <title>Importance of autophosphorylation at Ser186 in the A-loop of salt inducible kinase 1 for its sustained kinase activity.</title>
        <authorList>
            <person name="Hashimoto Y.K."/>
            <person name="Satoh T."/>
            <person name="Okamoto M."/>
            <person name="Takemori H."/>
        </authorList>
    </citation>
    <scope>FUNCTION IN PHOSPHORYLATION OF SIK1</scope>
</reference>
<reference key="29">
    <citation type="journal article" date="2008" name="Mol. Cell">
        <title>Kinase-selective enrichment enables quantitative phosphoproteomics of the kinome across the cell cycle.</title>
        <authorList>
            <person name="Daub H."/>
            <person name="Olsen J.V."/>
            <person name="Bairlein M."/>
            <person name="Gnad F."/>
            <person name="Oppermann F.S."/>
            <person name="Korner R."/>
            <person name="Greff Z."/>
            <person name="Keri G."/>
            <person name="Stemmann O."/>
            <person name="Mann M."/>
        </authorList>
    </citation>
    <scope>PHOSPHORYLATION [LARGE SCALE ANALYSIS] AT THR-402</scope>
    <scope>IDENTIFICATION BY MASS SPECTROMETRY [LARGE SCALE ANALYSIS]</scope>
    <source>
        <tissue>Cervix carcinoma</tissue>
    </source>
</reference>
<reference key="30">
    <citation type="journal article" date="2008" name="Proc. Natl. Acad. Sci. U.S.A.">
        <title>A quantitative atlas of mitotic phosphorylation.</title>
        <authorList>
            <person name="Dephoure N."/>
            <person name="Zhou C."/>
            <person name="Villen J."/>
            <person name="Beausoleil S.A."/>
            <person name="Bakalarski C.E."/>
            <person name="Elledge S.J."/>
            <person name="Gygi S.P."/>
        </authorList>
    </citation>
    <scope>PHOSPHORYLATION [LARGE SCALE ANALYSIS] AT THR-390</scope>
    <scope>IDENTIFICATION BY MASS SPECTROMETRY [LARGE SCALE ANALYSIS]</scope>
    <source>
        <tissue>Cervix carcinoma</tissue>
    </source>
</reference>
<reference key="31">
    <citation type="journal article" date="2009" name="Cardiovasc. Res.">
        <title>Glycogen synthase kinase-3beta is activated by matrix metalloproteinase-2 mediated proteolysis in cardiomyoblasts.</title>
        <authorList>
            <person name="Kandasamy A.D."/>
            <person name="Schulz R."/>
        </authorList>
    </citation>
    <scope>INTERACTION WITH MMP2</scope>
</reference>
<reference key="32">
    <citation type="journal article" date="2009" name="Cell Cycle">
        <title>A serine cluster mediates BMAL1-dependent CLOCK phosphorylation and degradation.</title>
        <authorList>
            <person name="Spengler M.L."/>
            <person name="Kuropatwinski K.K."/>
            <person name="Schumer M."/>
            <person name="Antoch M.P."/>
        </authorList>
    </citation>
    <scope>FUNCTION</scope>
    <scope>INTERACTION WITH CLOCK-BMAL1</scope>
</reference>
<reference key="33">
    <citation type="journal article" date="2009" name="J. Biol. Chem.">
        <title>GSK-3 phosphorylates delta-catenin and negatively regulates its stability via ubiquitination/proteosome-mediated proteolysis.</title>
        <authorList>
            <person name="Oh M."/>
            <person name="Kim H."/>
            <person name="Yang I."/>
            <person name="Park J.H."/>
            <person name="Cong W.T."/>
            <person name="Baek M.C."/>
            <person name="Bareiss S."/>
            <person name="Ki H."/>
            <person name="Lu Q."/>
            <person name="No J."/>
            <person name="Kwon I."/>
            <person name="Choi J.K."/>
            <person name="Kim K."/>
        </authorList>
    </citation>
    <scope>INTERACTION WITH CTNND2</scope>
</reference>
<reference key="34">
    <citation type="journal article" date="2009" name="Mol. Cell. Proteomics">
        <title>Large-scale proteomics analysis of the human kinome.</title>
        <authorList>
            <person name="Oppermann F.S."/>
            <person name="Gnad F."/>
            <person name="Olsen J.V."/>
            <person name="Hornberger R."/>
            <person name="Greff Z."/>
            <person name="Keri G."/>
            <person name="Mann M."/>
            <person name="Daub H."/>
        </authorList>
    </citation>
    <scope>IDENTIFICATION BY MASS SPECTROMETRY [LARGE SCALE ANALYSIS]</scope>
</reference>
<reference key="35">
    <citation type="journal article" date="2009" name="Sci. Signal.">
        <title>Quantitative phosphoproteomic analysis of T cell receptor signaling reveals system-wide modulation of protein-protein interactions.</title>
        <authorList>
            <person name="Mayya V."/>
            <person name="Lundgren D.H."/>
            <person name="Hwang S.-I."/>
            <person name="Rezaul K."/>
            <person name="Wu L."/>
            <person name="Eng J.K."/>
            <person name="Rodionov V."/>
            <person name="Han D.K."/>
        </authorList>
    </citation>
    <scope>IDENTIFICATION BY MASS SPECTROMETRY [LARGE SCALE ANALYSIS]</scope>
    <source>
        <tissue>Leukemic T-cell</tissue>
    </source>
</reference>
<reference key="36">
    <citation type="journal article" date="2010" name="J. Neurochem.">
        <title>The neuron-specific isoform of glycogen synthase kinase-3beta is required for axon growth.</title>
        <authorList>
            <person name="Castano Z."/>
            <person name="Gordon-Weeks P.R."/>
            <person name="Kypta R.M."/>
        </authorList>
    </citation>
    <scope>FUNCTION</scope>
    <scope>ALTERNATIVE SPLICING</scope>
</reference>
<reference key="37">
    <citation type="journal article" date="2010" name="Mol. Cell">
        <title>Phosphorylation-dependent regulation of PSF by GSK3 controls CD45 alternative splicing.</title>
        <authorList>
            <person name="Heyd F."/>
            <person name="Lynch K.W."/>
        </authorList>
    </citation>
    <scope>FUNCTION</scope>
</reference>
<reference key="38">
    <citation type="journal article" date="2010" name="Proc. Natl. Acad. Sci. U.S.A.">
        <title>Role of DAB2IP in modulating epithelial-to-mesenchymal transition and prostate cancer metastasis.</title>
        <authorList>
            <person name="Xie D."/>
            <person name="Gore C."/>
            <person name="Liu J."/>
            <person name="Pong R.C."/>
            <person name="Mason R."/>
            <person name="Hao G."/>
            <person name="Long M."/>
            <person name="Kabbani W."/>
            <person name="Yu L."/>
            <person name="Zhang H."/>
            <person name="Chen H."/>
            <person name="Sun X."/>
            <person name="Boothman D.A."/>
            <person name="Min W."/>
            <person name="Hsieh J.T."/>
        </authorList>
    </citation>
    <scope>INTERACTION WITH DAB2IP AND PPP2CA</scope>
</reference>
<reference key="39">
    <citation type="journal article" date="2010" name="Proc. Natl. Acad. Sci. U.S.A.">
        <title>ErbB2 receptor controls microtubule capture by recruiting ACF7 to the plasma membrane of migrating cells.</title>
        <authorList>
            <person name="Zaoui K."/>
            <person name="Benseddik K."/>
            <person name="Daou P."/>
            <person name="Salaun D."/>
            <person name="Badache A."/>
        </authorList>
    </citation>
    <scope>FUNCTION</scope>
    <scope>SUBCELLULAR LOCATION</scope>
    <scope>PHOSPHORYLATION AT SER-9</scope>
</reference>
<reference key="40">
    <citation type="journal article" date="2001" name="Chem. Rev.">
        <title>Glycogen synthase kinase-3: properties, functions, and regulation.</title>
        <authorList>
            <person name="Ali A."/>
            <person name="Hoeflich K.P."/>
            <person name="Woodgett J.R."/>
        </authorList>
    </citation>
    <scope>REVIEW ON FUNCTION</scope>
    <scope>ACTIVITY REGULATION</scope>
</reference>
<reference key="41">
    <citation type="journal article" date="2007" name="Diabetes Res. Clin. Pract.">
        <title>The role of GSK3 in glucose homeostasis and the development of insulin resistance.</title>
        <authorList>
            <person name="Lee J."/>
            <person name="Kim M.S."/>
        </authorList>
    </citation>
    <scope>REVIEW ON FUNCTION</scope>
</reference>
<reference key="42">
    <citation type="journal article" date="2009" name="Br. J. Pharmacol.">
        <title>Glycogen synthase kinase 3: more than a namesake.</title>
        <authorList>
            <person name="Rayasam G.V."/>
            <person name="Tulasi V.K."/>
            <person name="Sodhi R."/>
            <person name="Davis J.A."/>
            <person name="Ray A."/>
        </authorList>
    </citation>
    <scope>REVIEW ON FUNCTION</scope>
    <scope>ACTIVITY REGULATION</scope>
</reference>
<reference key="43">
    <citation type="journal article" date="2010" name="J. Biol. Chem.">
        <title>Glycogen synthase kinase 3beta interaction protein functions as an A-kinase anchoring protein.</title>
        <authorList>
            <person name="Hundsrucker C."/>
            <person name="Skroblin P."/>
            <person name="Christian F."/>
            <person name="Zenn H.M."/>
            <person name="Popara V."/>
            <person name="Joshi M."/>
            <person name="Eichhorst J."/>
            <person name="Wiesner B."/>
            <person name="Herberg F.W."/>
            <person name="Reif B."/>
            <person name="Rosenthal W."/>
            <person name="Klussmann E."/>
        </authorList>
    </citation>
    <scope>INTERACTION WITH GSKIP</scope>
    <scope>COMPLEX FORMATION WITH PRKAR2A AND GSKIP</scope>
</reference>
<reference key="44">
    <citation type="journal article" date="2010" name="Sci. Signal.">
        <title>Quantitative phosphoproteomics reveals widespread full phosphorylation site occupancy during mitosis.</title>
        <authorList>
            <person name="Olsen J.V."/>
            <person name="Vermeulen M."/>
            <person name="Santamaria A."/>
            <person name="Kumar C."/>
            <person name="Miller M.L."/>
            <person name="Jensen L.J."/>
            <person name="Gnad F."/>
            <person name="Cox J."/>
            <person name="Jensen T.S."/>
            <person name="Nigg E.A."/>
            <person name="Brunak S."/>
            <person name="Mann M."/>
        </authorList>
    </citation>
    <scope>IDENTIFICATION BY MASS SPECTROMETRY [LARGE SCALE ANALYSIS]</scope>
    <source>
        <tissue>Cervix carcinoma</tissue>
    </source>
</reference>
<reference key="45">
    <citation type="journal article" date="2011" name="BMC Syst. Biol.">
        <title>Initial characterization of the human central proteome.</title>
        <authorList>
            <person name="Burkard T.R."/>
            <person name="Planyavsky M."/>
            <person name="Kaupe I."/>
            <person name="Breitwieser F.P."/>
            <person name="Buerckstuemmer T."/>
            <person name="Bennett K.L."/>
            <person name="Superti-Furga G."/>
            <person name="Colinge J."/>
        </authorList>
    </citation>
    <scope>IDENTIFICATION BY MASS SPECTROMETRY [LARGE SCALE ANALYSIS]</scope>
</reference>
<reference key="46">
    <citation type="journal article" date="2011" name="Brain Pathol.">
        <title>Modulation of tau phosphorylation by the kinase PKR: implications in Alzheimer's disease.</title>
        <authorList>
            <person name="Bose A."/>
            <person name="Mouton-Liger F."/>
            <person name="Paquet C."/>
            <person name="Mazot P."/>
            <person name="Vigny M."/>
            <person name="Gray F."/>
            <person name="Hugon J."/>
        </authorList>
    </citation>
    <scope>SUBCELLULAR LOCATION</scope>
    <scope>TISSUE SPECIFICITY</scope>
    <scope>PHOSPHORYLATION</scope>
</reference>
<reference key="47">
    <citation type="journal article" date="2011" name="Sci. Signal.">
        <title>ER stress inhibits mTORC2 and Akt signaling through GSK-3beta-mediated phosphorylation of rictor.</title>
        <authorList>
            <person name="Chen C.H."/>
            <person name="Shaikenov T."/>
            <person name="Peterson T.R."/>
            <person name="Aimbetov R."/>
            <person name="Bissenbaev A.K."/>
            <person name="Lee S.W."/>
            <person name="Wu J."/>
            <person name="Lin H.K."/>
            <person name="Sarbassov D.D."/>
        </authorList>
    </citation>
    <scope>FUNCTION</scope>
    <scope>CATALYTIC ACTIVITY</scope>
</reference>
<reference key="48">
    <citation type="journal article" date="2012" name="J. Biol. Chem.">
        <title>Glycogen synthase kinase 3? (GSK3?) modulates antiviral activity of zinc-finger antiviral protein (ZAP).</title>
        <authorList>
            <person name="Sun L."/>
            <person name="Lv F."/>
            <person name="Guo X."/>
            <person name="Gao G."/>
        </authorList>
    </citation>
    <scope>FUNCTION</scope>
</reference>
<reference key="49">
    <citation type="journal article" date="2012" name="Science">
        <title>GSK3-TIP60-ULK1 signaling pathway links growth factor deprivation to autophagy.</title>
        <authorList>
            <person name="Lin S.Y."/>
            <person name="Li T.Y."/>
            <person name="Liu Q."/>
            <person name="Zhang C."/>
            <person name="Li X."/>
            <person name="Chen Y."/>
            <person name="Zhang S.M."/>
            <person name="Lian G."/>
            <person name="Liu Q."/>
            <person name="Ruan K."/>
            <person name="Wang Z."/>
            <person name="Zhang C.S."/>
            <person name="Chien K.Y."/>
            <person name="Wu J."/>
            <person name="Li Q."/>
            <person name="Han J."/>
            <person name="Lin S.C."/>
        </authorList>
    </citation>
    <scope>CATALYTIC ACTIVITY</scope>
</reference>
<reference key="50">
    <citation type="journal article" date="2013" name="Cell Commun. Signal.">
        <title>ARTD10 substrate identification on protein microarrays: regulation of GSK3beta by mono-ADP-ribosylation.</title>
        <authorList>
            <person name="Feijs K.L."/>
            <person name="Kleine H."/>
            <person name="Braczynski A."/>
            <person name="Forst A.H."/>
            <person name="Herzog N."/>
            <person name="Verheugd P."/>
            <person name="Linzen U."/>
            <person name="Kremmer E."/>
            <person name="Luscher B."/>
        </authorList>
    </citation>
    <scope>ADP-RIBOSYLATION BY PARP10</scope>
</reference>
<reference key="51">
    <citation type="journal article" date="2013" name="J. Proteome Res.">
        <title>Toward a comprehensive characterization of a human cancer cell phosphoproteome.</title>
        <authorList>
            <person name="Zhou H."/>
            <person name="Di Palma S."/>
            <person name="Preisinger C."/>
            <person name="Peng M."/>
            <person name="Polat A.N."/>
            <person name="Heck A.J."/>
            <person name="Mohammed S."/>
        </authorList>
    </citation>
    <scope>PHOSPHORYLATION [LARGE SCALE ANALYSIS] AT THR-390</scope>
    <scope>IDENTIFICATION BY MASS SPECTROMETRY [LARGE SCALE ANALYSIS]</scope>
    <source>
        <tissue>Cervix carcinoma</tissue>
        <tissue>Erythroleukemia</tissue>
    </source>
</reference>
<reference key="52">
    <citation type="journal article" date="2014" name="J. Proteomics">
        <title>An enzyme assisted RP-RPLC approach for in-depth analysis of human liver phosphoproteome.</title>
        <authorList>
            <person name="Bian Y."/>
            <person name="Song C."/>
            <person name="Cheng K."/>
            <person name="Dong M."/>
            <person name="Wang F."/>
            <person name="Huang J."/>
            <person name="Sun D."/>
            <person name="Wang L."/>
            <person name="Ye M."/>
            <person name="Zou H."/>
        </authorList>
    </citation>
    <scope>IDENTIFICATION BY MASS SPECTROMETRY [LARGE SCALE ANALYSIS]</scope>
    <source>
        <tissue>Liver</tissue>
    </source>
</reference>
<reference key="53">
    <citation type="journal article" date="2014" name="PLoS Genet.">
        <title>NCYM, a Cis-antisense gene of MYCN, encodes a de novo evolved protein that inhibits GSK3beta resulting in the stabilization of MYCN in human neuroblastomas.</title>
        <authorList>
            <person name="Suenaga Y."/>
            <person name="Islam S.M."/>
            <person name="Alagu J."/>
            <person name="Kaneko Y."/>
            <person name="Kato M."/>
            <person name="Tanaka Y."/>
            <person name="Kawana H."/>
            <person name="Hossain S."/>
            <person name="Matsumoto D."/>
            <person name="Yamamoto M."/>
            <person name="Shoji W."/>
            <person name="Itami M."/>
            <person name="Shibata T."/>
            <person name="Nakamura Y."/>
            <person name="Ohira M."/>
            <person name="Haraguchi S."/>
            <person name="Takatori A."/>
            <person name="Nakagawara A."/>
        </authorList>
    </citation>
    <scope>FUNCTION</scope>
    <scope>INTERACTION WITH NCYM</scope>
    <scope>PHOSPHORYLATION AT SER-9</scope>
</reference>
<reference key="54">
    <citation type="journal article" date="2015" name="J. Cell. Biochem.">
        <title>HN1 negatively influences the beta-catenin/E-cadherin interaction, and contributes to migration in prostate cells.</title>
        <authorList>
            <person name="Varisli L."/>
            <person name="Ozturk B.E."/>
            <person name="Akyuz G.K."/>
            <person name="Korkmaz K.S."/>
        </authorList>
    </citation>
    <scope>PHOSPHORYLATION AT SER-9 AND TYR-216</scope>
    <scope>INTERACTION WITH JPT1</scope>
    <scope>SUBCELLULAR LOCATION</scope>
</reference>
<reference key="55">
    <citation type="journal article" date="2015" name="Biochim. Biophys. Acta">
        <title>GSKIP- and GSK3-mediated anchoring strengthens cAMP/PKA/Drp1 axis signaling in the regulation of mitochondrial elongation.</title>
        <authorList>
            <person name="Loh J.K."/>
            <person name="Lin C.C."/>
            <person name="Yang M.C."/>
            <person name="Chou C.H."/>
            <person name="Chen W.S."/>
            <person name="Hong M.C."/>
            <person name="Cho C.L."/>
            <person name="Hsu C.M."/>
            <person name="Cheng J.T."/>
            <person name="Chou A.K."/>
            <person name="Chang C.H."/>
            <person name="Tseng C.N."/>
            <person name="Wang C.H."/>
            <person name="Lieu A.S."/>
            <person name="Howng S.L."/>
            <person name="Hong Y.R."/>
        </authorList>
    </citation>
    <scope>INTERACTION WITH GSKIP</scope>
    <scope>COMPLEX FORMATION WITH PRKAR2B AND GSKIP</scope>
</reference>
<reference key="56">
    <citation type="journal article" date="2015" name="J. Biol. Chem.">
        <title>Rictor Undergoes Glycogen Synthase Kinase 3 (GSK3)-dependent, FBXW7-mediated Ubiquitination and Proteasomal Degradation.</title>
        <authorList>
            <person name="Koo J."/>
            <person name="Wu X."/>
            <person name="Mao Z."/>
            <person name="Khuri F.R."/>
            <person name="Sun S.Y."/>
        </authorList>
    </citation>
    <scope>FUNCTION</scope>
    <scope>INTERACTION WITH RICTOR</scope>
</reference>
<reference key="57">
    <citation type="journal article" date="2016" name="J. Biol. Chem.">
        <title>The A-Kinase Anchoring Protein (AKAP) Glycogen Synthase Kinase 3beta Interaction Protein (GSKIP) Regulates beta-Catenin through Its Interactions with Both Protein Kinase A (PKA) and GSK3beta.</title>
        <authorList>
            <person name="Dema A."/>
            <person name="Schroeter M.F."/>
            <person name="Perets E."/>
            <person name="Skroblin P."/>
            <person name="Moutty M.C."/>
            <person name="Deak V.A."/>
            <person name="Birchmeier W."/>
            <person name="Klussmann E."/>
        </authorList>
    </citation>
    <scope>INTERACTION WITH GSKIP</scope>
    <scope>COMPLEX FORMATION WITH PRKAR2A AND GSKIP</scope>
</reference>
<reference key="58">
    <citation type="journal article" date="2017" name="Cell Res.">
        <title>Twa1/Gid8 is a beta-catenin nuclear retention factor in Wnt signaling and colorectal tumorigenesis.</title>
        <authorList>
            <person name="Lu Y."/>
            <person name="Xie S."/>
            <person name="Zhang W."/>
            <person name="Zhang C."/>
            <person name="Gao C."/>
            <person name="Sun Q."/>
            <person name="Cai Y."/>
            <person name="Xu Z."/>
            <person name="Xiao M."/>
            <person name="Xu Y."/>
            <person name="Huang X."/>
            <person name="Wu X."/>
            <person name="Liu W."/>
            <person name="Wang F."/>
            <person name="Kang Y."/>
            <person name="Zhou T."/>
        </authorList>
    </citation>
    <scope>INTERACTION WITH AXIN1 AND GID8</scope>
</reference>
<reference key="59">
    <citation type="journal article" date="2017" name="Oncotarget">
        <title>Cancer/testis antigen PIWIL2 suppresses circadian rhythms by regulating the stability and activity of BMAL1 and CLOCK.</title>
        <authorList>
            <person name="Lu Y."/>
            <person name="Zheng X."/>
            <person name="Hu W."/>
            <person name="Bian S."/>
            <person name="Zhang Z."/>
            <person name="Tao D."/>
            <person name="Liu Y."/>
            <person name="Ma Y."/>
        </authorList>
    </citation>
    <scope>FUNCTION</scope>
    <scope>INTERACTION WITH BMAL1</scope>
</reference>
<reference key="60">
    <citation type="journal article" date="2018" name="J. Mol. Cell Biol.">
        <title>Phosphorylated E2F1 is stabilized by nuclear USP11 to drive Peg10 gene expression and activate lung epithelial cells.</title>
        <authorList>
            <person name="Wang D."/>
            <person name="Zhao J."/>
            <person name="Li S."/>
            <person name="Wei J."/>
            <person name="Nan L."/>
            <person name="Mallampalli R.K."/>
            <person name="Weathington N.M."/>
            <person name="Ma H."/>
            <person name="Zhao Y."/>
        </authorList>
    </citation>
    <scope>FUNCTION</scope>
    <scope>CATALYTIC ACTIVITY</scope>
    <scope>MUTAGENESIS OF SER-9</scope>
</reference>
<reference key="61">
    <citation type="journal article" date="2015" name="Cancer Lett.">
        <title>FBXO11 promotes ubiquitination of the Snail family of transcription factors in cancer progression and epidermal development.</title>
        <authorList>
            <person name="Jin Y."/>
            <person name="Shenoy A.K."/>
            <person name="Doernberg S."/>
            <person name="Chen H."/>
            <person name="Luo H."/>
            <person name="Shen H."/>
            <person name="Lin T."/>
            <person name="Tarrash M."/>
            <person name="Cai Q."/>
            <person name="Hu X."/>
            <person name="Fiske R."/>
            <person name="Chen T."/>
            <person name="Wu L."/>
            <person name="Mohammed K.A."/>
            <person name="Rottiers V."/>
            <person name="Lee S.S."/>
            <person name="Lu J."/>
        </authorList>
    </citation>
    <scope>FUNCTION</scope>
    <scope>CATALYTIC ACTIVITY</scope>
</reference>
<reference key="62">
    <citation type="journal article" date="2018" name="Oncogene">
        <title>SPSB3 targets SNAIL for degradation in GSK-3beta phosphorylation-dependent manner and regulates metastasis.</title>
        <authorList>
            <person name="Liu Y."/>
            <person name="Zhou H."/>
            <person name="Zhu R."/>
            <person name="Ding F."/>
            <person name="Li Y."/>
            <person name="Cao X."/>
            <person name="Liu Z."/>
        </authorList>
    </citation>
    <scope>FUNCTION</scope>
    <scope>CATALYTIC ACTIVITY</scope>
</reference>
<reference key="63">
    <citation type="journal article" date="2019" name="Mol. Cell">
        <title>Pacer is a mediator of mTORC1 and GSK3-TIP60 signaling in regulation of autophagosome maturation and lipid metabolism.</title>
        <authorList>
            <person name="Cheng X."/>
            <person name="Ma X."/>
            <person name="Zhu Q."/>
            <person name="Song D."/>
            <person name="Ding X."/>
            <person name="Li L."/>
            <person name="Jiang X."/>
            <person name="Wang X."/>
            <person name="Tian R."/>
            <person name="Su H."/>
            <person name="Shen Z."/>
            <person name="Chen S."/>
            <person name="Liu T."/>
            <person name="Gong W."/>
            <person name="Liu W."/>
            <person name="Sun Q."/>
        </authorList>
    </citation>
    <scope>FUNCTION</scope>
</reference>
<reference key="64">
    <citation type="journal article" date="2019" name="Science">
        <title>LMBR1L regulates lymphopoiesis through Wnt/beta-catenin signaling.</title>
        <authorList>
            <person name="Choi J.H."/>
            <person name="Zhong X."/>
            <person name="McAlpine W."/>
            <person name="Liao T.C."/>
            <person name="Zhang D."/>
            <person name="Fang B."/>
            <person name="Russell J."/>
            <person name="Ludwig S."/>
            <person name="Nair-Gill E."/>
            <person name="Zhang Z."/>
            <person name="Wang K.W."/>
            <person name="Misawa T."/>
            <person name="Zhan X."/>
            <person name="Choi M."/>
            <person name="Wang T."/>
            <person name="Li X."/>
            <person name="Tang M."/>
            <person name="Sun Q."/>
            <person name="Yu L."/>
            <person name="Murray A.R."/>
            <person name="Moresco E.M.Y."/>
            <person name="Beutler B."/>
        </authorList>
    </citation>
    <scope>INTERACTION WITH LMBR1L</scope>
</reference>
<reference key="65">
    <citation type="journal article" date="2021" name="Biochem. Biophys. Res. Commun.">
        <title>A catenin of the plakophilin-subfamily, Pkp3, responds to canonical-Wnt pathway components and signals.</title>
        <authorList>
            <person name="Hong J.Y."/>
            <person name="Zapata J."/>
            <person name="Blackburn A."/>
            <person name="Baumert R."/>
            <person name="Bae S.M."/>
            <person name="Ji H."/>
            <person name="Nam H.J."/>
            <person name="Miller R.K."/>
            <person name="McCrea P.D."/>
        </authorList>
    </citation>
    <scope>INTERACTION WITH PKP3</scope>
</reference>
<reference key="66">
    <citation type="journal article" date="2022" name="Oncogenesis">
        <title>GSK3beta palmitoylation mediated by ZDHHC4 promotes tumorigenicity of glioblastoma stem cells in temozolomide-resistant glioblastoma through the EZH2-STAT3 axis.</title>
        <authorList>
            <person name="Zhao C."/>
            <person name="Yu H."/>
            <person name="Fan X."/>
            <person name="Niu W."/>
            <person name="Fan J."/>
            <person name="Sun S."/>
            <person name="Gong M."/>
            <person name="Zhao B."/>
            <person name="Fang Z."/>
            <person name="Chen X."/>
        </authorList>
    </citation>
    <scope>PHOSPHORYLATION AT SER-9</scope>
    <scope>MUTAGENESIS OF CYS-14</scope>
    <scope>SUBCELLULAR LOCATION</scope>
    <scope>PALMITOYLATION AT CYS-14</scope>
</reference>
<reference key="67">
    <citation type="journal article" date="2001" name="Cell">
        <title>Crystal structure of glycogen synthase kinase 3 beta: structural basis for phosphate-primed substrate specificity and autoinhibition.</title>
        <authorList>
            <person name="Dajani R."/>
            <person name="Fraser E."/>
            <person name="Roe S.M."/>
            <person name="Young N."/>
            <person name="Good V."/>
            <person name="Dale T.C."/>
            <person name="Pearl L.H."/>
        </authorList>
    </citation>
    <scope>X-RAY CRYSTALLOGRAPHY (2.8 ANGSTROMS) OF 35-386</scope>
</reference>
<reference key="68">
    <citation type="journal article" date="2001" name="Structure">
        <title>The structure of phosphorylated GSK-3beta complexed with a peptide, FRATtide, that inhibits beta-catenin phosphorylation.</title>
        <authorList>
            <person name="Bax B."/>
            <person name="Carter P.S."/>
            <person name="Lewis C."/>
            <person name="Guy A.R."/>
            <person name="Bridges A."/>
            <person name="Tanner R."/>
            <person name="Pettman G."/>
            <person name="Mannix C."/>
            <person name="Culbert A.A."/>
            <person name="Brown M.J.B."/>
            <person name="Smith D.G."/>
            <person name="Reith A.D."/>
        </authorList>
    </citation>
    <scope>X-RAY CRYSTALLOGRAPHY (2.9 ANGSTROMS) OF 27-393 OF PHOSPHORYLATED GSK3B</scope>
</reference>
<reference key="69">
    <citation type="journal article" date="2003" name="EMBO J.">
        <title>Structural basis for recruitment of glycogen synthase kinase 3beta to the axin-APC scaffold complex.</title>
        <authorList>
            <person name="Dajani R."/>
            <person name="Fraser E."/>
            <person name="Roe S.M."/>
            <person name="Yeo M."/>
            <person name="Good V.M."/>
            <person name="Thompson V."/>
            <person name="Dale T.C."/>
            <person name="Pearl L.H."/>
        </authorList>
    </citation>
    <scope>X-RAY CRYSTALLOGRAPHY (2.4 ANGSTROMS) OF 35-384 IN COMPLEX WITH AXIN1</scope>
    <scope>INTERACTION WITH AXIN1 AND FRAT1</scope>
    <scope>FUNCTION</scope>
    <scope>ACTIVITY REGULATION</scope>
    <scope>PHOSPHORYLATION AT TYR-216</scope>
</reference>
<accession>P49841</accession>
<accession>D3DN89</accession>
<accession>Q9BWH3</accession>
<accession>Q9UL47</accession>
<keyword id="KW-0002">3D-structure</keyword>
<keyword id="KW-0013">ADP-ribosylation</keyword>
<keyword id="KW-0025">Alternative splicing</keyword>
<keyword id="KW-0026">Alzheimer disease</keyword>
<keyword id="KW-0067">ATP-binding</keyword>
<keyword id="KW-0090">Biological rhythms</keyword>
<keyword id="KW-0119">Carbohydrate metabolism</keyword>
<keyword id="KW-1003">Cell membrane</keyword>
<keyword id="KW-0963">Cytoplasm</keyword>
<keyword id="KW-0217">Developmental protein</keyword>
<keyword id="KW-0219">Diabetes mellitus</keyword>
<keyword id="KW-0221">Differentiation</keyword>
<keyword id="KW-0321">Glycogen metabolism</keyword>
<keyword id="KW-0418">Kinase</keyword>
<keyword id="KW-0449">Lipoprotein</keyword>
<keyword id="KW-0472">Membrane</keyword>
<keyword id="KW-0524">Neurogenesis</keyword>
<keyword id="KW-0547">Nucleotide-binding</keyword>
<keyword id="KW-0539">Nucleus</keyword>
<keyword id="KW-0564">Palmitate</keyword>
<keyword id="KW-0597">Phosphoprotein</keyword>
<keyword id="KW-1267">Proteomics identification</keyword>
<keyword id="KW-1185">Reference proteome</keyword>
<keyword id="KW-0723">Serine/threonine-protein kinase</keyword>
<keyword id="KW-0734">Signal transduction inhibitor</keyword>
<keyword id="KW-0808">Transferase</keyword>
<keyword id="KW-0879">Wnt signaling pathway</keyword>
<sequence length="420" mass="46744">MSGRPRTTSFAESCKPVQQPSAFGSMKVSRDKDGSKVTTVVATPGQGPDRPQEVSYTDTKVIGNGSFGVVYQAKLCDSGELVAIKKVLQDKRFKNRELQIMRKLDHCNIVRLRYFFYSSGEKKDEVYLNLVLDYVPETVYRVARHYSRAKQTLPVIYVKLYMYQLFRSLAYIHSFGICHRDIKPQNLLLDPDTAVLKLCDFGSAKQLVRGEPNVSYICSRYYRAPELIFGATDYTSSIDVWSAGCVLAELLLGQPIFPGDSGVDQLVEIIKVLGTPTREQIREMNPNYTEFKFPQIKAHPWTKVFRPRTPPEAIALCSRLLEYTPTARLTPLEACAHSFFDELRDPNVKLPNGRDTPALFNFTTQELSSNPPLATILIPPHARIQAAASTPTNATAASDANTGDRGQTNNAASASASNST</sequence>
<protein>
    <recommendedName>
        <fullName evidence="58">Glycogen synthase kinase-3 beta</fullName>
        <shortName>GSK-3 beta</shortName>
        <ecNumber evidence="10">2.7.11.26</ecNumber>
    </recommendedName>
    <alternativeName>
        <fullName>Serine/threonine-protein kinase GSK3B</fullName>
        <ecNumber evidence="17 32 34 38 44 45">2.7.11.1</ecNumber>
    </alternativeName>
</protein>
<organism>
    <name type="scientific">Homo sapiens</name>
    <name type="common">Human</name>
    <dbReference type="NCBI Taxonomy" id="9606"/>
    <lineage>
        <taxon>Eukaryota</taxon>
        <taxon>Metazoa</taxon>
        <taxon>Chordata</taxon>
        <taxon>Craniata</taxon>
        <taxon>Vertebrata</taxon>
        <taxon>Euteleostomi</taxon>
        <taxon>Mammalia</taxon>
        <taxon>Eutheria</taxon>
        <taxon>Euarchontoglires</taxon>
        <taxon>Primates</taxon>
        <taxon>Haplorrhini</taxon>
        <taxon>Catarrhini</taxon>
        <taxon>Hominidae</taxon>
        <taxon>Homo</taxon>
    </lineage>
</organism>
<gene>
    <name evidence="63" type="primary">GSK3B</name>
</gene>
<dbReference type="EC" id="2.7.11.26" evidence="10"/>
<dbReference type="EC" id="2.7.11.1" evidence="17 32 34 38 44 45"/>
<dbReference type="EMBL" id="L33801">
    <property type="protein sequence ID" value="AAA66475.1"/>
    <property type="molecule type" value="mRNA"/>
</dbReference>
<dbReference type="EMBL" id="CH471052">
    <property type="protein sequence ID" value="EAW79533.1"/>
    <property type="molecule type" value="Genomic_DNA"/>
</dbReference>
<dbReference type="EMBL" id="CH471052">
    <property type="protein sequence ID" value="EAW79536.1"/>
    <property type="molecule type" value="Genomic_DNA"/>
</dbReference>
<dbReference type="EMBL" id="BC000251">
    <property type="protein sequence ID" value="AAH00251.1"/>
    <property type="molecule type" value="mRNA"/>
</dbReference>
<dbReference type="EMBL" id="BC012760">
    <property type="protein sequence ID" value="AAH12760.1"/>
    <property type="molecule type" value="mRNA"/>
</dbReference>
<dbReference type="EMBL" id="AF074333">
    <property type="protein sequence ID" value="AAD48517.1"/>
    <property type="molecule type" value="Genomic_DNA"/>
</dbReference>
<dbReference type="EMBL" id="AF098789">
    <property type="protein sequence ID" value="AAC69340.1"/>
    <property type="molecule type" value="Genomic_DNA"/>
</dbReference>
<dbReference type="CCDS" id="CCDS2996.1">
    <molecule id="P49841-2"/>
</dbReference>
<dbReference type="CCDS" id="CCDS54628.1">
    <molecule id="P49841-1"/>
</dbReference>
<dbReference type="PIR" id="S53324">
    <property type="entry name" value="S53324"/>
</dbReference>
<dbReference type="RefSeq" id="NP_001139628.1">
    <molecule id="P49841-1"/>
    <property type="nucleotide sequence ID" value="NM_001146156.2"/>
</dbReference>
<dbReference type="RefSeq" id="NP_002084.2">
    <molecule id="P49841-2"/>
    <property type="nucleotide sequence ID" value="NM_002093.3"/>
</dbReference>
<dbReference type="PDB" id="1GNG">
    <property type="method" value="X-ray"/>
    <property type="resolution" value="2.60 A"/>
    <property type="chains" value="A/B=27-393"/>
</dbReference>
<dbReference type="PDB" id="1H8F">
    <property type="method" value="X-ray"/>
    <property type="resolution" value="2.80 A"/>
    <property type="chains" value="A/B=35-386"/>
</dbReference>
<dbReference type="PDB" id="1I09">
    <property type="method" value="X-ray"/>
    <property type="resolution" value="2.70 A"/>
    <property type="chains" value="A/B=1-420"/>
</dbReference>
<dbReference type="PDB" id="1J1B">
    <property type="method" value="X-ray"/>
    <property type="resolution" value="1.80 A"/>
    <property type="chains" value="A/B=1-420"/>
</dbReference>
<dbReference type="PDB" id="1J1C">
    <property type="method" value="X-ray"/>
    <property type="resolution" value="2.10 A"/>
    <property type="chains" value="A/B=1-420"/>
</dbReference>
<dbReference type="PDB" id="1O6K">
    <property type="method" value="X-ray"/>
    <property type="resolution" value="1.70 A"/>
    <property type="chains" value="C=3-12"/>
</dbReference>
<dbReference type="PDB" id="1O6L">
    <property type="method" value="X-ray"/>
    <property type="resolution" value="1.60 A"/>
    <property type="chains" value="C=3-12"/>
</dbReference>
<dbReference type="PDB" id="1O9U">
    <property type="method" value="X-ray"/>
    <property type="resolution" value="2.40 A"/>
    <property type="chains" value="A=35-384"/>
</dbReference>
<dbReference type="PDB" id="1PYX">
    <property type="method" value="X-ray"/>
    <property type="resolution" value="2.40 A"/>
    <property type="chains" value="A/B=1-420"/>
</dbReference>
<dbReference type="PDB" id="1Q3D">
    <property type="method" value="X-ray"/>
    <property type="resolution" value="2.20 A"/>
    <property type="chains" value="A/B=2-420"/>
</dbReference>
<dbReference type="PDB" id="1Q3W">
    <property type="method" value="X-ray"/>
    <property type="resolution" value="2.30 A"/>
    <property type="chains" value="A/B=2-420"/>
</dbReference>
<dbReference type="PDB" id="1Q41">
    <property type="method" value="X-ray"/>
    <property type="resolution" value="2.10 A"/>
    <property type="chains" value="A/B=2-420"/>
</dbReference>
<dbReference type="PDB" id="1Q4L">
    <property type="method" value="X-ray"/>
    <property type="resolution" value="2.77 A"/>
    <property type="chains" value="A/B=2-420"/>
</dbReference>
<dbReference type="PDB" id="1Q5K">
    <property type="method" value="X-ray"/>
    <property type="resolution" value="1.94 A"/>
    <property type="chains" value="A/B=7-420"/>
</dbReference>
<dbReference type="PDB" id="1R0E">
    <property type="method" value="X-ray"/>
    <property type="resolution" value="2.25 A"/>
    <property type="chains" value="A/B=35-420"/>
</dbReference>
<dbReference type="PDB" id="1UV5">
    <property type="method" value="X-ray"/>
    <property type="resolution" value="2.80 A"/>
    <property type="chains" value="A=35-384"/>
</dbReference>
<dbReference type="PDB" id="2JDO">
    <property type="method" value="X-ray"/>
    <property type="resolution" value="1.80 A"/>
    <property type="chains" value="C=3-12"/>
</dbReference>
<dbReference type="PDB" id="2JDR">
    <property type="method" value="X-ray"/>
    <property type="resolution" value="2.30 A"/>
    <property type="chains" value="C=3-12"/>
</dbReference>
<dbReference type="PDB" id="2JLD">
    <property type="method" value="X-ray"/>
    <property type="resolution" value="2.35 A"/>
    <property type="chains" value="A/B=1-420"/>
</dbReference>
<dbReference type="PDB" id="2O5K">
    <property type="method" value="X-ray"/>
    <property type="resolution" value="3.20 A"/>
    <property type="chains" value="A=29-393"/>
</dbReference>
<dbReference type="PDB" id="2OW3">
    <property type="method" value="X-ray"/>
    <property type="resolution" value="2.80 A"/>
    <property type="chains" value="A/B=35-386"/>
</dbReference>
<dbReference type="PDB" id="2UW9">
    <property type="method" value="X-ray"/>
    <property type="resolution" value="2.10 A"/>
    <property type="chains" value="C=3-12"/>
</dbReference>
<dbReference type="PDB" id="2X39">
    <property type="method" value="X-ray"/>
    <property type="resolution" value="1.93 A"/>
    <property type="chains" value="C=3-12"/>
</dbReference>
<dbReference type="PDB" id="2XH5">
    <property type="method" value="X-ray"/>
    <property type="resolution" value="2.72 A"/>
    <property type="chains" value="C=3-12"/>
</dbReference>
<dbReference type="PDB" id="3CQU">
    <property type="method" value="X-ray"/>
    <property type="resolution" value="2.20 A"/>
    <property type="chains" value="C=3-12"/>
</dbReference>
<dbReference type="PDB" id="3CQW">
    <property type="method" value="X-ray"/>
    <property type="resolution" value="2.00 A"/>
    <property type="chains" value="C=3-12"/>
</dbReference>
<dbReference type="PDB" id="3DU8">
    <property type="method" value="X-ray"/>
    <property type="resolution" value="2.20 A"/>
    <property type="chains" value="A/B=1-420"/>
</dbReference>
<dbReference type="PDB" id="3E87">
    <property type="method" value="X-ray"/>
    <property type="resolution" value="2.30 A"/>
    <property type="chains" value="C/D=3-12"/>
</dbReference>
<dbReference type="PDB" id="3E88">
    <property type="method" value="X-ray"/>
    <property type="resolution" value="2.50 A"/>
    <property type="chains" value="C/D=3-12"/>
</dbReference>
<dbReference type="PDB" id="3E8D">
    <property type="method" value="X-ray"/>
    <property type="resolution" value="2.70 A"/>
    <property type="chains" value="C/D=3-12"/>
</dbReference>
<dbReference type="PDB" id="3F7Z">
    <property type="method" value="X-ray"/>
    <property type="resolution" value="2.40 A"/>
    <property type="chains" value="A/B=35-383"/>
</dbReference>
<dbReference type="PDB" id="3F88">
    <property type="method" value="X-ray"/>
    <property type="resolution" value="2.60 A"/>
    <property type="chains" value="A/B=35-383"/>
</dbReference>
<dbReference type="PDB" id="3GB2">
    <property type="method" value="X-ray"/>
    <property type="resolution" value="2.40 A"/>
    <property type="chains" value="A=34-383"/>
</dbReference>
<dbReference type="PDB" id="3I4B">
    <property type="method" value="X-ray"/>
    <property type="resolution" value="2.30 A"/>
    <property type="chains" value="A/B=7-420"/>
</dbReference>
<dbReference type="PDB" id="3L1S">
    <property type="method" value="X-ray"/>
    <property type="resolution" value="2.90 A"/>
    <property type="chains" value="A/B=7-420"/>
</dbReference>
<dbReference type="PDB" id="3M1S">
    <property type="method" value="X-ray"/>
    <property type="resolution" value="3.13 A"/>
    <property type="chains" value="A/B=1-420"/>
</dbReference>
<dbReference type="PDB" id="3MV5">
    <property type="method" value="X-ray"/>
    <property type="resolution" value="2.47 A"/>
    <property type="chains" value="C=3-12"/>
</dbReference>
<dbReference type="PDB" id="3OW4">
    <property type="method" value="X-ray"/>
    <property type="resolution" value="2.60 A"/>
    <property type="chains" value="C/D=3-12"/>
</dbReference>
<dbReference type="PDB" id="3PUP">
    <property type="method" value="X-ray"/>
    <property type="resolution" value="2.99 A"/>
    <property type="chains" value="A/B=1-420"/>
</dbReference>
<dbReference type="PDB" id="3Q3B">
    <property type="method" value="X-ray"/>
    <property type="resolution" value="2.70 A"/>
    <property type="chains" value="A/B=2-420"/>
</dbReference>
<dbReference type="PDB" id="3QKK">
    <property type="method" value="X-ray"/>
    <property type="resolution" value="2.30 A"/>
    <property type="chains" value="C=3-12"/>
</dbReference>
<dbReference type="PDB" id="3QKL">
    <property type="method" value="X-ray"/>
    <property type="resolution" value="1.90 A"/>
    <property type="chains" value="C=3-12"/>
</dbReference>
<dbReference type="PDB" id="3SAY">
    <property type="method" value="X-ray"/>
    <property type="resolution" value="2.23 A"/>
    <property type="chains" value="A/B=1-420"/>
</dbReference>
<dbReference type="PDB" id="3SD0">
    <property type="method" value="X-ray"/>
    <property type="resolution" value="2.70 A"/>
    <property type="chains" value="A/B=35-384"/>
</dbReference>
<dbReference type="PDB" id="3ZDI">
    <property type="method" value="X-ray"/>
    <property type="resolution" value="2.64 A"/>
    <property type="chains" value="A=35-384"/>
</dbReference>
<dbReference type="PDB" id="3ZRK">
    <property type="method" value="X-ray"/>
    <property type="resolution" value="2.37 A"/>
    <property type="chains" value="A/B=23-393"/>
</dbReference>
<dbReference type="PDB" id="3ZRL">
    <property type="method" value="X-ray"/>
    <property type="resolution" value="2.48 A"/>
    <property type="chains" value="A/B=23-393"/>
</dbReference>
<dbReference type="PDB" id="3ZRM">
    <property type="method" value="X-ray"/>
    <property type="resolution" value="2.49 A"/>
    <property type="chains" value="A/B=23-393"/>
</dbReference>
<dbReference type="PDB" id="4ACC">
    <property type="method" value="X-ray"/>
    <property type="resolution" value="2.21 A"/>
    <property type="chains" value="A/B=1-420"/>
</dbReference>
<dbReference type="PDB" id="4ACD">
    <property type="method" value="X-ray"/>
    <property type="resolution" value="2.60 A"/>
    <property type="chains" value="A/B=1-420"/>
</dbReference>
<dbReference type="PDB" id="4ACG">
    <property type="method" value="X-ray"/>
    <property type="resolution" value="2.60 A"/>
    <property type="chains" value="A/B=1-420"/>
</dbReference>
<dbReference type="PDB" id="4ACH">
    <property type="method" value="X-ray"/>
    <property type="resolution" value="2.60 A"/>
    <property type="chains" value="A/B=1-420"/>
</dbReference>
<dbReference type="PDB" id="4AFJ">
    <property type="method" value="X-ray"/>
    <property type="resolution" value="1.98 A"/>
    <property type="chains" value="A/B=27-393"/>
</dbReference>
<dbReference type="PDB" id="4B7T">
    <property type="method" value="X-ray"/>
    <property type="resolution" value="2.77 A"/>
    <property type="chains" value="A=35-384"/>
</dbReference>
<dbReference type="PDB" id="4DIT">
    <property type="method" value="X-ray"/>
    <property type="resolution" value="2.60 A"/>
    <property type="chains" value="A=27-393"/>
</dbReference>
<dbReference type="PDB" id="4EKK">
    <property type="method" value="X-ray"/>
    <property type="resolution" value="2.80 A"/>
    <property type="chains" value="C/D=3-12"/>
</dbReference>
<dbReference type="PDB" id="4IQ6">
    <property type="method" value="X-ray"/>
    <property type="resolution" value="3.12 A"/>
    <property type="chains" value="A/B=1-420"/>
</dbReference>
<dbReference type="PDB" id="4J1R">
    <property type="method" value="X-ray"/>
    <property type="resolution" value="2.70 A"/>
    <property type="chains" value="A/B/C/D=1-420"/>
</dbReference>
<dbReference type="PDB" id="4J71">
    <property type="method" value="X-ray"/>
    <property type="resolution" value="2.31 A"/>
    <property type="chains" value="A/B=1-420"/>
</dbReference>
<dbReference type="PDB" id="4NM0">
    <property type="method" value="X-ray"/>
    <property type="resolution" value="2.50 A"/>
    <property type="chains" value="A=1-383"/>
</dbReference>
<dbReference type="PDB" id="4NM3">
    <property type="method" value="X-ray"/>
    <property type="resolution" value="2.10 A"/>
    <property type="chains" value="A=1-383"/>
</dbReference>
<dbReference type="PDB" id="4NM5">
    <property type="method" value="X-ray"/>
    <property type="resolution" value="2.30 A"/>
    <property type="chains" value="A=13-383"/>
</dbReference>
<dbReference type="PDB" id="4NM7">
    <property type="method" value="X-ray"/>
    <property type="resolution" value="2.30 A"/>
    <property type="chains" value="A=13-383"/>
</dbReference>
<dbReference type="PDB" id="4PTC">
    <property type="method" value="X-ray"/>
    <property type="resolution" value="2.71 A"/>
    <property type="chains" value="A/B=1-420"/>
</dbReference>
<dbReference type="PDB" id="4PTE">
    <property type="method" value="X-ray"/>
    <property type="resolution" value="2.03 A"/>
    <property type="chains" value="A/B=1-420"/>
</dbReference>
<dbReference type="PDB" id="4PTG">
    <property type="method" value="X-ray"/>
    <property type="resolution" value="2.36 A"/>
    <property type="chains" value="A/B=1-420"/>
</dbReference>
<dbReference type="PDB" id="5F94">
    <property type="method" value="X-ray"/>
    <property type="resolution" value="2.51 A"/>
    <property type="chains" value="A/B=36-385"/>
</dbReference>
<dbReference type="PDB" id="5F95">
    <property type="method" value="X-ray"/>
    <property type="resolution" value="2.52 A"/>
    <property type="chains" value="A/B=36-385"/>
</dbReference>
<dbReference type="PDB" id="5HLN">
    <property type="method" value="X-ray"/>
    <property type="resolution" value="3.10 A"/>
    <property type="chains" value="A/B=1-420"/>
</dbReference>
<dbReference type="PDB" id="5HLP">
    <property type="method" value="X-ray"/>
    <property type="resolution" value="2.45 A"/>
    <property type="chains" value="A/B=1-420"/>
</dbReference>
<dbReference type="PDB" id="5K5N">
    <property type="method" value="X-ray"/>
    <property type="resolution" value="2.20 A"/>
    <property type="chains" value="A/B=28-384"/>
</dbReference>
<dbReference type="PDB" id="5KPK">
    <property type="method" value="X-ray"/>
    <property type="resolution" value="2.40 A"/>
    <property type="chains" value="A/B=1-420"/>
</dbReference>
<dbReference type="PDB" id="5KPL">
    <property type="method" value="X-ray"/>
    <property type="resolution" value="2.60 A"/>
    <property type="chains" value="A/B=1-420"/>
</dbReference>
<dbReference type="PDB" id="5KPM">
    <property type="method" value="X-ray"/>
    <property type="resolution" value="2.69 A"/>
    <property type="chains" value="A/B=1-420"/>
</dbReference>
<dbReference type="PDB" id="5OY4">
    <property type="method" value="X-ray"/>
    <property type="resolution" value="3.20 A"/>
    <property type="chains" value="A/B=1-420"/>
</dbReference>
<dbReference type="PDB" id="5T31">
    <property type="method" value="X-ray"/>
    <property type="resolution" value="2.85 A"/>
    <property type="chains" value="A/B=1-420"/>
</dbReference>
<dbReference type="PDB" id="6B8J">
    <property type="method" value="X-ray"/>
    <property type="resolution" value="2.60 A"/>
    <property type="chains" value="A=1-420"/>
</dbReference>
<dbReference type="PDB" id="6BUU">
    <property type="method" value="X-ray"/>
    <property type="resolution" value="2.40 A"/>
    <property type="chains" value="F/G=3-12"/>
</dbReference>
<dbReference type="PDB" id="6GJO">
    <property type="method" value="X-ray"/>
    <property type="resolution" value="2.91 A"/>
    <property type="chains" value="A/B=7-420"/>
</dbReference>
<dbReference type="PDB" id="6GN1">
    <property type="method" value="X-ray"/>
    <property type="resolution" value="2.60 A"/>
    <property type="chains" value="A/B=27-393"/>
</dbReference>
<dbReference type="PDB" id="6H0U">
    <property type="method" value="X-ray"/>
    <property type="resolution" value="2.30 A"/>
    <property type="chains" value="A/B=1-420"/>
</dbReference>
<dbReference type="PDB" id="6HK3">
    <property type="method" value="X-ray"/>
    <property type="resolution" value="2.35 A"/>
    <property type="chains" value="A/B=35-384"/>
</dbReference>
<dbReference type="PDB" id="6HK4">
    <property type="method" value="X-ray"/>
    <property type="resolution" value="2.50 A"/>
    <property type="chains" value="A/B=35-384"/>
</dbReference>
<dbReference type="PDB" id="6HK7">
    <property type="method" value="X-ray"/>
    <property type="resolution" value="3.20 A"/>
    <property type="chains" value="A=36-382"/>
</dbReference>
<dbReference type="PDB" id="6NPZ">
    <property type="method" value="X-ray"/>
    <property type="resolution" value="2.12 A"/>
    <property type="chains" value="F/G=3-12"/>
</dbReference>
<dbReference type="PDB" id="6TCU">
    <property type="method" value="X-ray"/>
    <property type="resolution" value="2.14 A"/>
    <property type="chains" value="A=35-386"/>
</dbReference>
<dbReference type="PDB" id="6V6L">
    <property type="method" value="X-ray"/>
    <property type="resolution" value="2.19 A"/>
    <property type="chains" value="A=1-420"/>
</dbReference>
<dbReference type="PDB" id="6Y9R">
    <property type="method" value="X-ray"/>
    <property type="resolution" value="2.08 A"/>
    <property type="chains" value="A=35-384"/>
</dbReference>
<dbReference type="PDB" id="6Y9S">
    <property type="method" value="X-ray"/>
    <property type="resolution" value="2.03 A"/>
    <property type="chains" value="A/B=35-384"/>
</dbReference>
<dbReference type="PDB" id="7B6F">
    <property type="method" value="X-ray"/>
    <property type="resolution" value="2.05 A"/>
    <property type="chains" value="A=26-383"/>
</dbReference>
<dbReference type="PDB" id="7OY5">
    <property type="method" value="X-ray"/>
    <property type="resolution" value="2.57 A"/>
    <property type="chains" value="A/B=35-385"/>
</dbReference>
<dbReference type="PDB" id="7SXH">
    <property type="method" value="X-ray"/>
    <property type="resolution" value="2.09 A"/>
    <property type="chains" value="A=37-383"/>
</dbReference>
<dbReference type="PDB" id="7SXJ">
    <property type="method" value="X-ray"/>
    <property type="resolution" value="1.85 A"/>
    <property type="chains" value="A=34-383"/>
</dbReference>
<dbReference type="PDB" id="7U2Z">
    <property type="method" value="X-ray"/>
    <property type="resolution" value="2.21 A"/>
    <property type="chains" value="A/B=35-382"/>
</dbReference>
<dbReference type="PDB" id="7U31">
    <property type="method" value="X-ray"/>
    <property type="resolution" value="2.38 A"/>
    <property type="chains" value="A/B=36-385"/>
</dbReference>
<dbReference type="PDB" id="7U33">
    <property type="method" value="X-ray"/>
    <property type="resolution" value="2.60 A"/>
    <property type="chains" value="A/B=35-385"/>
</dbReference>
<dbReference type="PDB" id="7U36">
    <property type="method" value="X-ray"/>
    <property type="resolution" value="2.75 A"/>
    <property type="chains" value="A/B=35-385"/>
</dbReference>
<dbReference type="PDB" id="7Z1F">
    <property type="method" value="X-ray"/>
    <property type="resolution" value="3.00 A"/>
    <property type="chains" value="A/B=26-383"/>
</dbReference>
<dbReference type="PDB" id="7Z1G">
    <property type="method" value="X-ray"/>
    <property type="resolution" value="2.85 A"/>
    <property type="chains" value="A=26-383"/>
</dbReference>
<dbReference type="PDB" id="8AUZ">
    <property type="method" value="X-ray"/>
    <property type="resolution" value="2.66 A"/>
    <property type="chains" value="A/B=26-383"/>
</dbReference>
<dbReference type="PDB" id="8AV1">
    <property type="method" value="X-ray"/>
    <property type="resolution" value="2.15 A"/>
    <property type="chains" value="A/B=26-383"/>
</dbReference>
<dbReference type="PDB" id="8DJC">
    <property type="method" value="X-ray"/>
    <property type="resolution" value="2.46 A"/>
    <property type="chains" value="A/B=1-420"/>
</dbReference>
<dbReference type="PDB" id="8DJD">
    <property type="method" value="X-ray"/>
    <property type="resolution" value="2.21 A"/>
    <property type="chains" value="A/B=1-420"/>
</dbReference>
<dbReference type="PDB" id="8DJE">
    <property type="method" value="X-ray"/>
    <property type="resolution" value="2.37 A"/>
    <property type="chains" value="A/B=1-420"/>
</dbReference>
<dbReference type="PDB" id="8FF8">
    <property type="method" value="X-ray"/>
    <property type="resolution" value="2.33 A"/>
    <property type="chains" value="A/B=1-420"/>
</dbReference>
<dbReference type="PDB" id="8QJI">
    <property type="method" value="X-ray"/>
    <property type="resolution" value="3.02 A"/>
    <property type="chains" value="A=26-383"/>
</dbReference>
<dbReference type="PDB" id="8XN6">
    <property type="method" value="X-ray"/>
    <property type="resolution" value="2.40 A"/>
    <property type="chains" value="A/B=2-420"/>
</dbReference>
<dbReference type="PDBsum" id="1GNG"/>
<dbReference type="PDBsum" id="1H8F"/>
<dbReference type="PDBsum" id="1I09"/>
<dbReference type="PDBsum" id="1J1B"/>
<dbReference type="PDBsum" id="1J1C"/>
<dbReference type="PDBsum" id="1O6K"/>
<dbReference type="PDBsum" id="1O6L"/>
<dbReference type="PDBsum" id="1O9U"/>
<dbReference type="PDBsum" id="1PYX"/>
<dbReference type="PDBsum" id="1Q3D"/>
<dbReference type="PDBsum" id="1Q3W"/>
<dbReference type="PDBsum" id="1Q41"/>
<dbReference type="PDBsum" id="1Q4L"/>
<dbReference type="PDBsum" id="1Q5K"/>
<dbReference type="PDBsum" id="1R0E"/>
<dbReference type="PDBsum" id="1UV5"/>
<dbReference type="PDBsum" id="2JDO"/>
<dbReference type="PDBsum" id="2JDR"/>
<dbReference type="PDBsum" id="2JLD"/>
<dbReference type="PDBsum" id="2O5K"/>
<dbReference type="PDBsum" id="2OW3"/>
<dbReference type="PDBsum" id="2UW9"/>
<dbReference type="PDBsum" id="2X39"/>
<dbReference type="PDBsum" id="2XH5"/>
<dbReference type="PDBsum" id="3CQU"/>
<dbReference type="PDBsum" id="3CQW"/>
<dbReference type="PDBsum" id="3DU8"/>
<dbReference type="PDBsum" id="3E87"/>
<dbReference type="PDBsum" id="3E88"/>
<dbReference type="PDBsum" id="3E8D"/>
<dbReference type="PDBsum" id="3F7Z"/>
<dbReference type="PDBsum" id="3F88"/>
<dbReference type="PDBsum" id="3GB2"/>
<dbReference type="PDBsum" id="3I4B"/>
<dbReference type="PDBsum" id="3L1S"/>
<dbReference type="PDBsum" id="3M1S"/>
<dbReference type="PDBsum" id="3MV5"/>
<dbReference type="PDBsum" id="3OW4"/>
<dbReference type="PDBsum" id="3PUP"/>
<dbReference type="PDBsum" id="3Q3B"/>
<dbReference type="PDBsum" id="3QKK"/>
<dbReference type="PDBsum" id="3QKL"/>
<dbReference type="PDBsum" id="3SAY"/>
<dbReference type="PDBsum" id="3SD0"/>
<dbReference type="PDBsum" id="3ZDI"/>
<dbReference type="PDBsum" id="3ZRK"/>
<dbReference type="PDBsum" id="3ZRL"/>
<dbReference type="PDBsum" id="3ZRM"/>
<dbReference type="PDBsum" id="4ACC"/>
<dbReference type="PDBsum" id="4ACD"/>
<dbReference type="PDBsum" id="4ACG"/>
<dbReference type="PDBsum" id="4ACH"/>
<dbReference type="PDBsum" id="4AFJ"/>
<dbReference type="PDBsum" id="4B7T"/>
<dbReference type="PDBsum" id="4DIT"/>
<dbReference type="PDBsum" id="4EKK"/>
<dbReference type="PDBsum" id="4IQ6"/>
<dbReference type="PDBsum" id="4J1R"/>
<dbReference type="PDBsum" id="4J71"/>
<dbReference type="PDBsum" id="4NM0"/>
<dbReference type="PDBsum" id="4NM3"/>
<dbReference type="PDBsum" id="4NM5"/>
<dbReference type="PDBsum" id="4NM7"/>
<dbReference type="PDBsum" id="4PTC"/>
<dbReference type="PDBsum" id="4PTE"/>
<dbReference type="PDBsum" id="4PTG"/>
<dbReference type="PDBsum" id="5F94"/>
<dbReference type="PDBsum" id="5F95"/>
<dbReference type="PDBsum" id="5HLN"/>
<dbReference type="PDBsum" id="5HLP"/>
<dbReference type="PDBsum" id="5K5N"/>
<dbReference type="PDBsum" id="5KPK"/>
<dbReference type="PDBsum" id="5KPL"/>
<dbReference type="PDBsum" id="5KPM"/>
<dbReference type="PDBsum" id="5OY4"/>
<dbReference type="PDBsum" id="5T31"/>
<dbReference type="PDBsum" id="6B8J"/>
<dbReference type="PDBsum" id="6BUU"/>
<dbReference type="PDBsum" id="6GJO"/>
<dbReference type="PDBsum" id="6GN1"/>
<dbReference type="PDBsum" id="6H0U"/>
<dbReference type="PDBsum" id="6HK3"/>
<dbReference type="PDBsum" id="6HK4"/>
<dbReference type="PDBsum" id="6HK7"/>
<dbReference type="PDBsum" id="6NPZ"/>
<dbReference type="PDBsum" id="6TCU"/>
<dbReference type="PDBsum" id="6V6L"/>
<dbReference type="PDBsum" id="6Y9R"/>
<dbReference type="PDBsum" id="6Y9S"/>
<dbReference type="PDBsum" id="7B6F"/>
<dbReference type="PDBsum" id="7OY5"/>
<dbReference type="PDBsum" id="7SXH"/>
<dbReference type="PDBsum" id="7SXJ"/>
<dbReference type="PDBsum" id="7U2Z"/>
<dbReference type="PDBsum" id="7U31"/>
<dbReference type="PDBsum" id="7U33"/>
<dbReference type="PDBsum" id="7U36"/>
<dbReference type="PDBsum" id="7Z1F"/>
<dbReference type="PDBsum" id="7Z1G"/>
<dbReference type="PDBsum" id="8AUZ"/>
<dbReference type="PDBsum" id="8AV1"/>
<dbReference type="PDBsum" id="8DJC"/>
<dbReference type="PDBsum" id="8DJD"/>
<dbReference type="PDBsum" id="8DJE"/>
<dbReference type="PDBsum" id="8FF8"/>
<dbReference type="PDBsum" id="8QJI"/>
<dbReference type="PDBsum" id="8XN6"/>
<dbReference type="SMR" id="P49841"/>
<dbReference type="BioGRID" id="109187">
    <property type="interactions" value="863"/>
</dbReference>
<dbReference type="ComplexPortal" id="CPX-109">
    <property type="entry name" value="Beta-catenin destruction core complex, APC-AXIN1-GSK3B variant"/>
</dbReference>
<dbReference type="ComplexPortal" id="CPX-439">
    <property type="entry name" value="Beta-catenin destruction core complex, APC-AXIN2-GSK3B variant"/>
</dbReference>
<dbReference type="ComplexPortal" id="CPX-440">
    <property type="entry name" value="Beta-catenin destruction core complex, APC2-AXIN2-GSK3B variant"/>
</dbReference>
<dbReference type="ComplexPortal" id="CPX-459">
    <property type="entry name" value="Nuclear export complex FRAT1-GSK3B"/>
</dbReference>
<dbReference type="ComplexPortal" id="CPX-462">
    <property type="entry name" value="Nuclear export complex FRAT2-GSK3B"/>
</dbReference>
<dbReference type="ComplexPortal" id="CPX-99">
    <property type="entry name" value="Beta-catenin destruction core complex, APC2-AXIN1-GSK3B variant"/>
</dbReference>
<dbReference type="CORUM" id="P49841"/>
<dbReference type="DIP" id="DIP-878N"/>
<dbReference type="ELM" id="P49841"/>
<dbReference type="FunCoup" id="P49841">
    <property type="interactions" value="3788"/>
</dbReference>
<dbReference type="IntAct" id="P49841">
    <property type="interactions" value="369"/>
</dbReference>
<dbReference type="MINT" id="P49841"/>
<dbReference type="STRING" id="9606.ENSP00000324806"/>
<dbReference type="BindingDB" id="P49841"/>
<dbReference type="ChEMBL" id="CHEMBL262"/>
<dbReference type="DrugBank" id="DB08073">
    <property type="generic name" value="(2S)-1-(1H-INDOL-3-YL)-3-{[5-(3-METHYL-1H-INDAZOL-5-YL)PYRIDIN-3-YL]OXY}PROPAN-2-AMINE"/>
</dbReference>
<dbReference type="DrugBank" id="DB07149">
    <property type="generic name" value="(7S)-2-(2-aminopyrimidin-4-yl)-7-(2-fluoroethyl)-1,5,6,7-tetrahydro-4H-pyrrolo[3,2-c]pyridin-4-one"/>
</dbReference>
<dbReference type="DrugBank" id="DB07014">
    <property type="generic name" value="2-(1,3-benzodioxol-5-yl)-5-[(3-fluoro-4-methoxybenzyl)sulfanyl]-1,3,4-oxadiazole"/>
</dbReference>
<dbReference type="DrugBank" id="DB07676">
    <property type="generic name" value="3-({[(3S)-3,4-dihydroxybutyl]oxy}amino)-1H,2'H-2,3'-biindol-2'-one"/>
</dbReference>
<dbReference type="DrugBank" id="DB01772">
    <property type="generic name" value="3-[3-(2,3-Dihydroxy-Propylamino)-Phenyl]-4-(5-Fluoro-1-Methyl-1h-Indol-3-Yl)-Pyrrole-2,5-Dione"/>
</dbReference>
<dbReference type="DrugBank" id="DB07859">
    <property type="generic name" value="4-(4-CHLOROPHENYL)-4-[4-(1H-PYRAZOL-4-YL)PHENYL]PIPERIDINE"/>
</dbReference>
<dbReference type="DrugBank" id="DB07585">
    <property type="generic name" value="5-(5-chloro-7H-pyrrolo[2,3-d]pyrimidin-4-yl)-4,5,6,7-tetrahydro-1H-imidazo[4,5-c]pyridine"/>
</dbReference>
<dbReference type="DrugBank" id="DB07058">
    <property type="generic name" value="5-[1-(4-methoxyphenyl)-1H-benzimidazol-6-yl]-1,3,4-oxadiazole-2(3H)-thione"/>
</dbReference>
<dbReference type="DrugBank" id="DB03444">
    <property type="generic name" value="6-bromoindirubin-3'-oxime"/>
</dbReference>
<dbReference type="DrugBank" id="DB04014">
    <property type="generic name" value="Alsterpaullone"/>
</dbReference>
<dbReference type="DrugBank" id="DB01950">
    <property type="generic name" value="AR-AO-14418"/>
</dbReference>
<dbReference type="DrugBank" id="DB03777">
    <property type="generic name" value="Bisindolylmaleimide I"/>
</dbReference>
<dbReference type="DrugBank" id="DB12429">
    <property type="generic name" value="CI-1040"/>
</dbReference>
<dbReference type="DrugBank" id="DB08846">
    <property type="generic name" value="Ellagic acid"/>
</dbReference>
<dbReference type="DrugBank" id="DB16047">
    <property type="generic name" value="Elraglusib"/>
</dbReference>
<dbReference type="DrugBank" id="DB12010">
    <property type="generic name" value="Fostamatinib"/>
</dbReference>
<dbReference type="DrugBank" id="DB02052">
    <property type="generic name" value="Indirubin-3'-monoxime"/>
</dbReference>
<dbReference type="DrugBank" id="DB07947">
    <property type="generic name" value="ISOQUINOLINE-5-SULFONIC ACID (2-(2-(4-CHLOROBENZYLOXY)ETHYLAMINO)ETHYL)AMIDE"/>
</dbReference>
<dbReference type="DrugBank" id="DB14509">
    <property type="generic name" value="Lithium carbonate"/>
</dbReference>
<dbReference type="DrugBank" id="DB01356">
    <property type="generic name" value="Lithium cation"/>
</dbReference>
<dbReference type="DrugBank" id="DB14507">
    <property type="generic name" value="Lithium citrate"/>
</dbReference>
<dbReference type="DrugBank" id="DB14508">
    <property type="generic name" value="Lithium succinate"/>
</dbReference>
<dbReference type="DrugBank" id="DB11913">
    <property type="generic name" value="LY-2090314"/>
</dbReference>
<dbReference type="DrugBank" id="DB08454">
    <property type="generic name" value="N-(5-METHYL-1H-PYRAZOL-3-YL)-2-PHENYLQUINAZOLIN-4-AMINE"/>
</dbReference>
<dbReference type="DrugBank" id="DB07812">
    <property type="generic name" value="N-[(1S)-2-amino-1-phenylethyl]-5-(1H-pyrrolo[2,3-b]pyridin-4-yl)thiophene-2-carboxamide"/>
</dbReference>
<dbReference type="DrugBank" id="DB07584">
    <property type="generic name" value="N-[2-(5-methyl-4H-1,2,4-triazol-3-yl)phenyl]-7H-pyrrolo[2,3-d]pyrimidin-4-amine"/>
</dbReference>
<dbReference type="DrugBank" id="DB07126">
    <property type="generic name" value="O6-CYCLOHEXYLMETHOXY-2-(4'-SULPHAMOYLANILINO) PURINE"/>
</dbReference>
<dbReference type="DrugBank" id="DB04395">
    <property type="generic name" value="Phosphoaminophosphonic Acid-Adenylate Ester"/>
</dbReference>
<dbReference type="DrugBank" id="DB01793">
    <property type="generic name" value="SB-409513"/>
</dbReference>
<dbReference type="DrugBank" id="DB02010">
    <property type="generic name" value="Staurosporine"/>
</dbReference>
<dbReference type="DrugBank" id="DB04462">
    <property type="generic name" value="Tetrabromo-2-Benzotriazole"/>
</dbReference>
<dbReference type="DrugBank" id="DB12129">
    <property type="generic name" value="Tideglusib"/>
</dbReference>
<dbReference type="DrugCentral" id="P49841"/>
<dbReference type="GuidetoPHARMACOLOGY" id="2030"/>
<dbReference type="GlyCosmos" id="P49841">
    <property type="glycosylation" value="3 sites, 1 glycan"/>
</dbReference>
<dbReference type="GlyGen" id="P49841">
    <property type="glycosylation" value="25 sites, 1 O-linked glycan (24 sites)"/>
</dbReference>
<dbReference type="iPTMnet" id="P49841"/>
<dbReference type="PhosphoSitePlus" id="P49841"/>
<dbReference type="SwissPalm" id="P49841"/>
<dbReference type="BioMuta" id="GSK3B"/>
<dbReference type="DMDM" id="20455502"/>
<dbReference type="CPTAC" id="CPTAC-3038"/>
<dbReference type="CPTAC" id="CPTAC-3039"/>
<dbReference type="CPTAC" id="CPTAC-5749"/>
<dbReference type="CPTAC" id="CPTAC-5750"/>
<dbReference type="CPTAC" id="CPTAC-5751"/>
<dbReference type="CPTAC" id="CPTAC-5790"/>
<dbReference type="CPTAC" id="CPTAC-5791"/>
<dbReference type="CPTAC" id="CPTAC-804"/>
<dbReference type="CPTAC" id="non-CPTAC-5401"/>
<dbReference type="CPTAC" id="non-CPTAC-5403"/>
<dbReference type="CPTAC" id="non-CPTAC-5404"/>
<dbReference type="CPTAC" id="non-CPTAC-5554"/>
<dbReference type="CPTAC" id="non-CPTAC-5556"/>
<dbReference type="CPTAC" id="non-CPTAC-5705"/>
<dbReference type="jPOST" id="P49841"/>
<dbReference type="MassIVE" id="P49841"/>
<dbReference type="PaxDb" id="9606-ENSP00000324806"/>
<dbReference type="PeptideAtlas" id="P49841"/>
<dbReference type="ProteomicsDB" id="56151">
    <molecule id="P49841-1"/>
</dbReference>
<dbReference type="ProteomicsDB" id="56152">
    <molecule id="P49841-2"/>
</dbReference>
<dbReference type="Pumba" id="P49841"/>
<dbReference type="Antibodypedia" id="4266">
    <property type="antibodies" value="1359 antibodies from 54 providers"/>
</dbReference>
<dbReference type="CPTC" id="P49841">
    <property type="antibodies" value="10 antibodies"/>
</dbReference>
<dbReference type="DNASU" id="2932"/>
<dbReference type="Ensembl" id="ENST00000264235.13">
    <molecule id="P49841-1"/>
    <property type="protein sequence ID" value="ENSP00000264235.9"/>
    <property type="gene ID" value="ENSG00000082701.17"/>
</dbReference>
<dbReference type="Ensembl" id="ENST00000316626.6">
    <molecule id="P49841-2"/>
    <property type="protein sequence ID" value="ENSP00000324806.5"/>
    <property type="gene ID" value="ENSG00000082701.17"/>
</dbReference>
<dbReference type="GeneID" id="2932"/>
<dbReference type="KEGG" id="hsa:2932"/>
<dbReference type="MANE-Select" id="ENST00000264235.13">
    <property type="protein sequence ID" value="ENSP00000264235.9"/>
    <property type="RefSeq nucleotide sequence ID" value="NM_001146156.2"/>
    <property type="RefSeq protein sequence ID" value="NP_001139628.1"/>
</dbReference>
<dbReference type="UCSC" id="uc003edn.4">
    <molecule id="P49841-1"/>
    <property type="organism name" value="human"/>
</dbReference>
<dbReference type="AGR" id="HGNC:4617"/>
<dbReference type="CTD" id="2932"/>
<dbReference type="DisGeNET" id="2932"/>
<dbReference type="GeneCards" id="GSK3B"/>
<dbReference type="HGNC" id="HGNC:4617">
    <property type="gene designation" value="GSK3B"/>
</dbReference>
<dbReference type="HPA" id="ENSG00000082701">
    <property type="expression patterns" value="Low tissue specificity"/>
</dbReference>
<dbReference type="MalaCards" id="GSK3B"/>
<dbReference type="MIM" id="605004">
    <property type="type" value="gene"/>
</dbReference>
<dbReference type="neXtProt" id="NX_P49841"/>
<dbReference type="OpenTargets" id="ENSG00000082701"/>
<dbReference type="PharmGKB" id="PA29009"/>
<dbReference type="VEuPathDB" id="HostDB:ENSG00000082701"/>
<dbReference type="eggNOG" id="KOG0658">
    <property type="taxonomic scope" value="Eukaryota"/>
</dbReference>
<dbReference type="GeneTree" id="ENSGT00520000055635"/>
<dbReference type="HOGENOM" id="CLU_000288_181_20_1"/>
<dbReference type="InParanoid" id="P49841"/>
<dbReference type="OMA" id="MKTTMPM"/>
<dbReference type="OrthoDB" id="272141at2759"/>
<dbReference type="PAN-GO" id="P49841">
    <property type="GO annotations" value="14 GO annotations based on evolutionary models"/>
</dbReference>
<dbReference type="PhylomeDB" id="P49841"/>
<dbReference type="TreeFam" id="TF101104"/>
<dbReference type="BRENDA" id="2.7.11.26">
    <property type="organism ID" value="2681"/>
</dbReference>
<dbReference type="PathwayCommons" id="P49841"/>
<dbReference type="Reactome" id="R-HSA-195253">
    <property type="pathway name" value="Degradation of beta-catenin by the destruction complex"/>
</dbReference>
<dbReference type="Reactome" id="R-HSA-196299">
    <property type="pathway name" value="Beta-catenin phosphorylation cascade"/>
</dbReference>
<dbReference type="Reactome" id="R-HSA-198323">
    <property type="pathway name" value="AKT phosphorylates targets in the cytosol"/>
</dbReference>
<dbReference type="Reactome" id="R-HSA-3371453">
    <property type="pathway name" value="Regulation of HSF1-mediated heat shock response"/>
</dbReference>
<dbReference type="Reactome" id="R-HSA-399956">
    <property type="pathway name" value="CRMPs in Sema3A signaling"/>
</dbReference>
<dbReference type="Reactome" id="R-HSA-4641262">
    <property type="pathway name" value="Disassembly of the destruction complex and recruitment of AXIN to the membrane"/>
</dbReference>
<dbReference type="Reactome" id="R-HSA-5250924">
    <property type="pathway name" value="B-WICH complex positively regulates rRNA expression"/>
</dbReference>
<dbReference type="Reactome" id="R-HSA-5339716">
    <property type="pathway name" value="Signaling by GSK3beta mutants"/>
</dbReference>
<dbReference type="Reactome" id="R-HSA-5358747">
    <property type="pathway name" value="CTNNB1 S33 mutants aren't phosphorylated"/>
</dbReference>
<dbReference type="Reactome" id="R-HSA-5358749">
    <property type="pathway name" value="CTNNB1 S37 mutants aren't phosphorylated"/>
</dbReference>
<dbReference type="Reactome" id="R-HSA-5358751">
    <property type="pathway name" value="CTNNB1 S45 mutants aren't phosphorylated"/>
</dbReference>
<dbReference type="Reactome" id="R-HSA-5358752">
    <property type="pathway name" value="CTNNB1 T41 mutants aren't phosphorylated"/>
</dbReference>
<dbReference type="Reactome" id="R-HSA-5467337">
    <property type="pathway name" value="APC truncation mutants have impaired AXIN binding"/>
</dbReference>
<dbReference type="Reactome" id="R-HSA-5467340">
    <property type="pathway name" value="AXIN missense mutants destabilize the destruction complex"/>
</dbReference>
<dbReference type="Reactome" id="R-HSA-5467348">
    <property type="pathway name" value="Truncations of AMER1 destabilize the destruction complex"/>
</dbReference>
<dbReference type="Reactome" id="R-HSA-5610783">
    <property type="pathway name" value="Degradation of GLI2 by the proteasome"/>
</dbReference>
<dbReference type="Reactome" id="R-HSA-5610785">
    <property type="pathway name" value="GLI3 is processed to GLI3R by the proteasome"/>
</dbReference>
<dbReference type="Reactome" id="R-HSA-5674400">
    <property type="pathway name" value="Constitutive Signaling by AKT1 E17K in Cancer"/>
</dbReference>
<dbReference type="Reactome" id="R-HSA-75815">
    <property type="pathway name" value="Ubiquitin-dependent degradation of Cyclin D"/>
</dbReference>
<dbReference type="Reactome" id="R-HSA-8939902">
    <property type="pathway name" value="Regulation of RUNX2 expression and activity"/>
</dbReference>
<dbReference type="Reactome" id="R-HSA-9683610">
    <property type="pathway name" value="Maturation of nucleoprotein"/>
</dbReference>
<dbReference type="Reactome" id="R-HSA-9694631">
    <property type="pathway name" value="Maturation of nucleoprotein"/>
</dbReference>
<dbReference type="Reactome" id="R-HSA-9762114">
    <property type="pathway name" value="GSK3B and BTRC:CUL1-mediated-degradation of NFE2L2"/>
</dbReference>
<dbReference type="Reactome" id="R-HSA-9856649">
    <property type="pathway name" value="Transcriptional and post-translational regulation of MITF-M expression and activity"/>
</dbReference>
<dbReference type="SignaLink" id="P49841"/>
<dbReference type="SIGNOR" id="P49841"/>
<dbReference type="BioGRID-ORCS" id="2932">
    <property type="hits" value="75 hits in 1226 CRISPR screens"/>
</dbReference>
<dbReference type="CD-CODE" id="804901D1">
    <property type="entry name" value="Nuclear speckle"/>
</dbReference>
<dbReference type="CD-CODE" id="FB4E32DD">
    <property type="entry name" value="Presynaptic clusters and postsynaptic densities"/>
</dbReference>
<dbReference type="ChiTaRS" id="GSK3B">
    <property type="organism name" value="human"/>
</dbReference>
<dbReference type="EvolutionaryTrace" id="P49841"/>
<dbReference type="GeneWiki" id="GSK3B"/>
<dbReference type="GenomeRNAi" id="2932"/>
<dbReference type="Pharos" id="P49841">
    <property type="development level" value="Tclin"/>
</dbReference>
<dbReference type="PRO" id="PR:P49841"/>
<dbReference type="Proteomes" id="UP000005640">
    <property type="component" value="Chromosome 3"/>
</dbReference>
<dbReference type="RNAct" id="P49841">
    <property type="molecule type" value="protein"/>
</dbReference>
<dbReference type="Bgee" id="ENSG00000082701">
    <property type="expression patterns" value="Expressed in calcaneal tendon and 197 other cell types or tissues"/>
</dbReference>
<dbReference type="ExpressionAtlas" id="P49841">
    <property type="expression patterns" value="baseline and differential"/>
</dbReference>
<dbReference type="GO" id="GO:0030424">
    <property type="term" value="C:axon"/>
    <property type="evidence" value="ECO:0000250"/>
    <property type="project" value="ARUK-UCL"/>
</dbReference>
<dbReference type="GO" id="GO:0030877">
    <property type="term" value="C:beta-catenin destruction complex"/>
    <property type="evidence" value="ECO:0000314"/>
    <property type="project" value="UniProtKB"/>
</dbReference>
<dbReference type="GO" id="GO:0005813">
    <property type="term" value="C:centrosome"/>
    <property type="evidence" value="ECO:0000314"/>
    <property type="project" value="UniProtKB"/>
</dbReference>
<dbReference type="GO" id="GO:0005737">
    <property type="term" value="C:cytoplasm"/>
    <property type="evidence" value="ECO:0000314"/>
    <property type="project" value="UniProtKB"/>
</dbReference>
<dbReference type="GO" id="GO:0005829">
    <property type="term" value="C:cytosol"/>
    <property type="evidence" value="ECO:0000314"/>
    <property type="project" value="HPA"/>
</dbReference>
<dbReference type="GO" id="GO:0030425">
    <property type="term" value="C:dendrite"/>
    <property type="evidence" value="ECO:0000250"/>
    <property type="project" value="ARUK-UCL"/>
</dbReference>
<dbReference type="GO" id="GO:0098978">
    <property type="term" value="C:glutamatergic synapse"/>
    <property type="evidence" value="ECO:0000314"/>
    <property type="project" value="SynGO"/>
</dbReference>
<dbReference type="GO" id="GO:0005739">
    <property type="term" value="C:mitochondrion"/>
    <property type="evidence" value="ECO:0007669"/>
    <property type="project" value="GOC"/>
</dbReference>
<dbReference type="GO" id="GO:0005654">
    <property type="term" value="C:nucleoplasm"/>
    <property type="evidence" value="ECO:0000314"/>
    <property type="project" value="HPA"/>
</dbReference>
<dbReference type="GO" id="GO:0005634">
    <property type="term" value="C:nucleus"/>
    <property type="evidence" value="ECO:0000314"/>
    <property type="project" value="UniProtKB"/>
</dbReference>
<dbReference type="GO" id="GO:0005886">
    <property type="term" value="C:plasma membrane"/>
    <property type="evidence" value="ECO:0000314"/>
    <property type="project" value="UniProtKB"/>
</dbReference>
<dbReference type="GO" id="GO:0098794">
    <property type="term" value="C:postsynapse"/>
    <property type="evidence" value="ECO:0007669"/>
    <property type="project" value="GOC"/>
</dbReference>
<dbReference type="GO" id="GO:0098793">
    <property type="term" value="C:presynapse"/>
    <property type="evidence" value="ECO:0007669"/>
    <property type="project" value="GOC"/>
</dbReference>
<dbReference type="GO" id="GO:1990909">
    <property type="term" value="C:Wnt signalosome"/>
    <property type="evidence" value="ECO:0000304"/>
    <property type="project" value="ParkinsonsUK-UCL"/>
</dbReference>
<dbReference type="GO" id="GO:0005524">
    <property type="term" value="F:ATP binding"/>
    <property type="evidence" value="ECO:0007669"/>
    <property type="project" value="UniProtKB-KW"/>
</dbReference>
<dbReference type="GO" id="GO:0008013">
    <property type="term" value="F:beta-catenin binding"/>
    <property type="evidence" value="ECO:0000353"/>
    <property type="project" value="BHF-UCL"/>
</dbReference>
<dbReference type="GO" id="GO:0034452">
    <property type="term" value="F:dynactin binding"/>
    <property type="evidence" value="ECO:0000353"/>
    <property type="project" value="ARUK-UCL"/>
</dbReference>
<dbReference type="GO" id="GO:0016301">
    <property type="term" value="F:kinase activity"/>
    <property type="evidence" value="ECO:0000314"/>
    <property type="project" value="UniProtKB"/>
</dbReference>
<dbReference type="GO" id="GO:0051059">
    <property type="term" value="F:NF-kappaB binding"/>
    <property type="evidence" value="ECO:0000353"/>
    <property type="project" value="UniProtKB"/>
</dbReference>
<dbReference type="GO" id="GO:0002039">
    <property type="term" value="F:p53 binding"/>
    <property type="evidence" value="ECO:0000314"/>
    <property type="project" value="MGI"/>
</dbReference>
<dbReference type="GO" id="GO:0002020">
    <property type="term" value="F:protease binding"/>
    <property type="evidence" value="ECO:0000353"/>
    <property type="project" value="ParkinsonsUK-UCL"/>
</dbReference>
<dbReference type="GO" id="GO:0034236">
    <property type="term" value="F:protein kinase A catalytic subunit binding"/>
    <property type="evidence" value="ECO:0000353"/>
    <property type="project" value="BHF-UCL"/>
</dbReference>
<dbReference type="GO" id="GO:0004672">
    <property type="term" value="F:protein kinase activity"/>
    <property type="evidence" value="ECO:0000315"/>
    <property type="project" value="UniProtKB"/>
</dbReference>
<dbReference type="GO" id="GO:0019901">
    <property type="term" value="F:protein kinase binding"/>
    <property type="evidence" value="ECO:0000353"/>
    <property type="project" value="UniProtKB"/>
</dbReference>
<dbReference type="GO" id="GO:0106310">
    <property type="term" value="F:protein serine kinase activity"/>
    <property type="evidence" value="ECO:0000316"/>
    <property type="project" value="ARUK-UCL"/>
</dbReference>
<dbReference type="GO" id="GO:0004674">
    <property type="term" value="F:protein serine/threonine kinase activity"/>
    <property type="evidence" value="ECO:0000314"/>
    <property type="project" value="UniProtKB"/>
</dbReference>
<dbReference type="GO" id="GO:0061629">
    <property type="term" value="F:RNA polymerase II-specific DNA-binding transcription factor binding"/>
    <property type="evidence" value="ECO:0000353"/>
    <property type="project" value="UniProtKB"/>
</dbReference>
<dbReference type="GO" id="GO:0097110">
    <property type="term" value="F:scaffold protein binding"/>
    <property type="evidence" value="ECO:0000353"/>
    <property type="project" value="BHF-UCL"/>
</dbReference>
<dbReference type="GO" id="GO:0048156">
    <property type="term" value="F:tau protein binding"/>
    <property type="evidence" value="ECO:0000303"/>
    <property type="project" value="ARUK-UCL"/>
</dbReference>
<dbReference type="GO" id="GO:0050321">
    <property type="term" value="F:tau-protein kinase activity"/>
    <property type="evidence" value="ECO:0000314"/>
    <property type="project" value="UniProtKB"/>
</dbReference>
<dbReference type="GO" id="GO:0031625">
    <property type="term" value="F:ubiquitin protein ligase binding"/>
    <property type="evidence" value="ECO:0000353"/>
    <property type="project" value="BHF-UCL"/>
</dbReference>
<dbReference type="GO" id="GO:0060070">
    <property type="term" value="P:canonical Wnt signaling pathway"/>
    <property type="evidence" value="ECO:0000314"/>
    <property type="project" value="BHF-UCL"/>
</dbReference>
<dbReference type="GO" id="GO:0030154">
    <property type="term" value="P:cell differentiation"/>
    <property type="evidence" value="ECO:0000318"/>
    <property type="project" value="GO_Central"/>
</dbReference>
<dbReference type="GO" id="GO:1904646">
    <property type="term" value="P:cellular response to amyloid-beta"/>
    <property type="evidence" value="ECO:0000250"/>
    <property type="project" value="ARUK-UCL"/>
</dbReference>
<dbReference type="GO" id="GO:0036016">
    <property type="term" value="P:cellular response to interleukin-3"/>
    <property type="evidence" value="ECO:0000250"/>
    <property type="project" value="UniProtKB"/>
</dbReference>
<dbReference type="GO" id="GO:0071300">
    <property type="term" value="P:cellular response to retinoic acid"/>
    <property type="evidence" value="ECO:0000315"/>
    <property type="project" value="ARUK-UCL"/>
</dbReference>
<dbReference type="GO" id="GO:0007623">
    <property type="term" value="P:circadian rhythm"/>
    <property type="evidence" value="ECO:0000250"/>
    <property type="project" value="UniProtKB"/>
</dbReference>
<dbReference type="GO" id="GO:0001837">
    <property type="term" value="P:epithelial to mesenchymal transition"/>
    <property type="evidence" value="ECO:0000315"/>
    <property type="project" value="UniProtKB"/>
</dbReference>
<dbReference type="GO" id="GO:0006983">
    <property type="term" value="P:ER overload response"/>
    <property type="evidence" value="ECO:0000314"/>
    <property type="project" value="MGI"/>
</dbReference>
<dbReference type="GO" id="GO:0030010">
    <property type="term" value="P:establishment of cell polarity"/>
    <property type="evidence" value="ECO:0000250"/>
    <property type="project" value="ARUK-UCL"/>
</dbReference>
<dbReference type="GO" id="GO:0060079">
    <property type="term" value="P:excitatory postsynaptic potential"/>
    <property type="evidence" value="ECO:0000303"/>
    <property type="project" value="ParkinsonsUK-UCL"/>
</dbReference>
<dbReference type="GO" id="GO:0097191">
    <property type="term" value="P:extrinsic apoptotic signaling pathway"/>
    <property type="evidence" value="ECO:0000250"/>
    <property type="project" value="ARUK-UCL"/>
</dbReference>
<dbReference type="GO" id="GO:0097192">
    <property type="term" value="P:extrinsic apoptotic signaling pathway in absence of ligand"/>
    <property type="evidence" value="ECO:0000250"/>
    <property type="project" value="UniProtKB"/>
</dbReference>
<dbReference type="GO" id="GO:0007212">
    <property type="term" value="P:G protein-coupled dopamine receptor signaling pathway"/>
    <property type="evidence" value="ECO:0000303"/>
    <property type="project" value="ParkinsonsUK-UCL"/>
</dbReference>
<dbReference type="GO" id="GO:0005977">
    <property type="term" value="P:glycogen metabolic process"/>
    <property type="evidence" value="ECO:0000314"/>
    <property type="project" value="BHF-UCL"/>
</dbReference>
<dbReference type="GO" id="GO:0003170">
    <property type="term" value="P:heart valve development"/>
    <property type="evidence" value="ECO:0000250"/>
    <property type="project" value="BHF-UCL"/>
</dbReference>
<dbReference type="GO" id="GO:0021766">
    <property type="term" value="P:hippocampus development"/>
    <property type="evidence" value="ECO:0000315"/>
    <property type="project" value="BHF-UCL"/>
</dbReference>
<dbReference type="GO" id="GO:0008286">
    <property type="term" value="P:insulin receptor signaling pathway"/>
    <property type="evidence" value="ECO:0000318"/>
    <property type="project" value="GO_Central"/>
</dbReference>
<dbReference type="GO" id="GO:0035556">
    <property type="term" value="P:intracellular signal transduction"/>
    <property type="evidence" value="ECO:0000314"/>
    <property type="project" value="MGI"/>
</dbReference>
<dbReference type="GO" id="GO:0030011">
    <property type="term" value="P:maintenance of cell polarity"/>
    <property type="evidence" value="ECO:0000250"/>
    <property type="project" value="ARUK-UCL"/>
</dbReference>
<dbReference type="GO" id="GO:0007005">
    <property type="term" value="P:mitochondrion organization"/>
    <property type="evidence" value="ECO:0000315"/>
    <property type="project" value="ParkinsonsUK-UCL"/>
</dbReference>
<dbReference type="GO" id="GO:0043066">
    <property type="term" value="P:negative regulation of apoptotic process"/>
    <property type="evidence" value="ECO:0000314"/>
    <property type="project" value="MGI"/>
</dbReference>
<dbReference type="GO" id="GO:0070885">
    <property type="term" value="P:negative regulation of calcineurin-NFAT signaling cascade"/>
    <property type="evidence" value="ECO:0000315"/>
    <property type="project" value="UniProtKB"/>
</dbReference>
<dbReference type="GO" id="GO:0090090">
    <property type="term" value="P:negative regulation of canonical Wnt signaling pathway"/>
    <property type="evidence" value="ECO:0000315"/>
    <property type="project" value="ARUK-UCL"/>
</dbReference>
<dbReference type="GO" id="GO:0030336">
    <property type="term" value="P:negative regulation of cell migration"/>
    <property type="evidence" value="ECO:0000314"/>
    <property type="project" value="UniProt"/>
</dbReference>
<dbReference type="GO" id="GO:1904339">
    <property type="term" value="P:negative regulation of dopaminergic neuron differentiation"/>
    <property type="evidence" value="ECO:0000304"/>
    <property type="project" value="ParkinsonsUK-UCL"/>
</dbReference>
<dbReference type="GO" id="GO:0010719">
    <property type="term" value="P:negative regulation of epithelial to mesenchymal transition"/>
    <property type="evidence" value="ECO:0000314"/>
    <property type="project" value="UniProtKB"/>
</dbReference>
<dbReference type="GO" id="GO:1902042">
    <property type="term" value="P:negative regulation of extrinsic apoptotic signaling pathway via death domain receptors"/>
    <property type="evidence" value="ECO:0000315"/>
    <property type="project" value="UniProtKB"/>
</dbReference>
<dbReference type="GO" id="GO:0010629">
    <property type="term" value="P:negative regulation of gene expression"/>
    <property type="evidence" value="ECO:0000315"/>
    <property type="project" value="ARUK-UCL"/>
</dbReference>
<dbReference type="GO" id="GO:2000466">
    <property type="term" value="P:negative regulation of glycogen (starch) synthase activity"/>
    <property type="evidence" value="ECO:0000304"/>
    <property type="project" value="UniProtKB"/>
</dbReference>
<dbReference type="GO" id="GO:0045719">
    <property type="term" value="P:negative regulation of glycogen biosynthetic process"/>
    <property type="evidence" value="ECO:0000304"/>
    <property type="project" value="UniProtKB"/>
</dbReference>
<dbReference type="GO" id="GO:2000740">
    <property type="term" value="P:negative regulation of mesenchymal stem cell differentiation"/>
    <property type="evidence" value="ECO:0000315"/>
    <property type="project" value="ARUK-UCL"/>
</dbReference>
<dbReference type="GO" id="GO:0045668">
    <property type="term" value="P:negative regulation of osteoblast differentiation"/>
    <property type="evidence" value="ECO:0000315"/>
    <property type="project" value="ARUK-UCL"/>
</dbReference>
<dbReference type="GO" id="GO:1900181">
    <property type="term" value="P:negative regulation of protein localization to nucleus"/>
    <property type="evidence" value="ECO:0000250"/>
    <property type="project" value="BHF-UCL"/>
</dbReference>
<dbReference type="GO" id="GO:0031333">
    <property type="term" value="P:negative regulation of protein-containing complex assembly"/>
    <property type="evidence" value="ECO:0000315"/>
    <property type="project" value="BHF-UCL"/>
</dbReference>
<dbReference type="GO" id="GO:0032007">
    <property type="term" value="P:negative regulation of TOR signaling"/>
    <property type="evidence" value="ECO:0000318"/>
    <property type="project" value="GO_Central"/>
</dbReference>
<dbReference type="GO" id="GO:1903940">
    <property type="term" value="P:negative regulation of TORC2 signaling"/>
    <property type="evidence" value="ECO:0000314"/>
    <property type="project" value="UniProtKB"/>
</dbReference>
<dbReference type="GO" id="GO:2000077">
    <property type="term" value="P:negative regulation of type B pancreatic cell development"/>
    <property type="evidence" value="ECO:0000304"/>
    <property type="project" value="UniProtKB"/>
</dbReference>
<dbReference type="GO" id="GO:0031175">
    <property type="term" value="P:neuron projection development"/>
    <property type="evidence" value="ECO:0000314"/>
    <property type="project" value="UniProtKB"/>
</dbReference>
<dbReference type="GO" id="GO:0106027">
    <property type="term" value="P:neuron projection organization"/>
    <property type="evidence" value="ECO:0000250"/>
    <property type="project" value="ARUK-UCL"/>
</dbReference>
<dbReference type="GO" id="GO:0018105">
    <property type="term" value="P:peptidyl-serine phosphorylation"/>
    <property type="evidence" value="ECO:0000314"/>
    <property type="project" value="MGI"/>
</dbReference>
<dbReference type="GO" id="GO:0010508">
    <property type="term" value="P:positive regulation of autophagy"/>
    <property type="evidence" value="ECO:0000250"/>
    <property type="project" value="UniProtKB"/>
</dbReference>
<dbReference type="GO" id="GO:0045597">
    <property type="term" value="P:positive regulation of cell differentiation"/>
    <property type="evidence" value="ECO:0000315"/>
    <property type="project" value="ARUK-UCL"/>
</dbReference>
<dbReference type="GO" id="GO:0001954">
    <property type="term" value="P:positive regulation of cell-matrix adhesion"/>
    <property type="evidence" value="ECO:0000315"/>
    <property type="project" value="BHF-UCL"/>
</dbReference>
<dbReference type="GO" id="GO:0045724">
    <property type="term" value="P:positive regulation of cilium assembly"/>
    <property type="evidence" value="ECO:0000250"/>
    <property type="project" value="UniProtKB"/>
</dbReference>
<dbReference type="GO" id="GO:0010628">
    <property type="term" value="P:positive regulation of gene expression"/>
    <property type="evidence" value="ECO:0000315"/>
    <property type="project" value="ARUK-UCL"/>
</dbReference>
<dbReference type="GO" id="GO:1901030">
    <property type="term" value="P:positive regulation of mitochondrial outer membrane permeabilization involved in apoptotic signaling pathway"/>
    <property type="evidence" value="ECO:0000250"/>
    <property type="project" value="UniProtKB"/>
</dbReference>
<dbReference type="GO" id="GO:0043525">
    <property type="term" value="P:positive regulation of neuron apoptotic process"/>
    <property type="evidence" value="ECO:0000318"/>
    <property type="project" value="GO_Central"/>
</dbReference>
<dbReference type="GO" id="GO:0032436">
    <property type="term" value="P:positive regulation of proteasomal ubiquitin-dependent protein catabolic process"/>
    <property type="evidence" value="ECO:0000314"/>
    <property type="project" value="FlyBase"/>
</dbReference>
<dbReference type="GO" id="GO:0032092">
    <property type="term" value="P:positive regulation of protein binding"/>
    <property type="evidence" value="ECO:0000250"/>
    <property type="project" value="UniProtKB"/>
</dbReference>
<dbReference type="GO" id="GO:0045732">
    <property type="term" value="P:positive regulation of protein catabolic process"/>
    <property type="evidence" value="ECO:0000305"/>
    <property type="project" value="BHF-UCL"/>
</dbReference>
<dbReference type="GO" id="GO:0046827">
    <property type="term" value="P:positive regulation of protein export from nucleus"/>
    <property type="evidence" value="ECO:0000314"/>
    <property type="project" value="MGI"/>
</dbReference>
<dbReference type="GO" id="GO:1904781">
    <property type="term" value="P:positive regulation of protein localization to centrosome"/>
    <property type="evidence" value="ECO:0000315"/>
    <property type="project" value="ARUK-UCL"/>
</dbReference>
<dbReference type="GO" id="GO:1903566">
    <property type="term" value="P:positive regulation of protein localization to cilium"/>
    <property type="evidence" value="ECO:0000250"/>
    <property type="project" value="UniProtKB"/>
</dbReference>
<dbReference type="GO" id="GO:0031398">
    <property type="term" value="P:positive regulation of protein ubiquitination"/>
    <property type="evidence" value="ECO:0000314"/>
    <property type="project" value="UniProt"/>
</dbReference>
<dbReference type="GO" id="GO:0031334">
    <property type="term" value="P:positive regulation of protein-containing complex assembly"/>
    <property type="evidence" value="ECO:0000314"/>
    <property type="project" value="BHF-UCL"/>
</dbReference>
<dbReference type="GO" id="GO:0099171">
    <property type="term" value="P:presynaptic modulation of chemical synaptic transmission"/>
    <property type="evidence" value="ECO:0000314"/>
    <property type="project" value="SynGO"/>
</dbReference>
<dbReference type="GO" id="GO:0043161">
    <property type="term" value="P:proteasome-mediated ubiquitin-dependent protein catabolic process"/>
    <property type="evidence" value="ECO:0000303"/>
    <property type="project" value="ComplexPortal"/>
</dbReference>
<dbReference type="GO" id="GO:0046777">
    <property type="term" value="P:protein autophosphorylation"/>
    <property type="evidence" value="ECO:0000314"/>
    <property type="project" value="UniProtKB"/>
</dbReference>
<dbReference type="GO" id="GO:0006468">
    <property type="term" value="P:protein phosphorylation"/>
    <property type="evidence" value="ECO:0000314"/>
    <property type="project" value="UniProtKB"/>
</dbReference>
<dbReference type="GO" id="GO:0030516">
    <property type="term" value="P:regulation of axon extension"/>
    <property type="evidence" value="ECO:0000250"/>
    <property type="project" value="ARUK-UCL"/>
</dbReference>
<dbReference type="GO" id="GO:0050770">
    <property type="term" value="P:regulation of axonogenesis"/>
    <property type="evidence" value="ECO:0000250"/>
    <property type="project" value="ARUK-UCL"/>
</dbReference>
<dbReference type="GO" id="GO:1900034">
    <property type="term" value="P:regulation of cellular response to heat"/>
    <property type="evidence" value="ECO:0000304"/>
    <property type="project" value="Reactome"/>
</dbReference>
<dbReference type="GO" id="GO:0042752">
    <property type="term" value="P:regulation of circadian rhythm"/>
    <property type="evidence" value="ECO:0000250"/>
    <property type="project" value="UniProtKB"/>
</dbReference>
<dbReference type="GO" id="GO:0048814">
    <property type="term" value="P:regulation of dendrite morphogenesis"/>
    <property type="evidence" value="ECO:0000250"/>
    <property type="project" value="ARUK-UCL"/>
</dbReference>
<dbReference type="GO" id="GO:1900271">
    <property type="term" value="P:regulation of long-term synaptic potentiation"/>
    <property type="evidence" value="ECO:0000250"/>
    <property type="project" value="UniProtKB"/>
</dbReference>
<dbReference type="GO" id="GO:0150101">
    <property type="term" value="P:regulation of microtubule anchoring at centrosome"/>
    <property type="evidence" value="ECO:0000315"/>
    <property type="project" value="ARUK-UCL"/>
</dbReference>
<dbReference type="GO" id="GO:0070507">
    <property type="term" value="P:regulation of microtubule cytoskeleton organization"/>
    <property type="evidence" value="ECO:0000250"/>
    <property type="project" value="ARUK-UCL"/>
</dbReference>
<dbReference type="GO" id="GO:0032886">
    <property type="term" value="P:regulation of microtubule-based process"/>
    <property type="evidence" value="ECO:0000315"/>
    <property type="project" value="UniProtKB"/>
</dbReference>
<dbReference type="GO" id="GO:0010975">
    <property type="term" value="P:regulation of neuron projection development"/>
    <property type="evidence" value="ECO:0000318"/>
    <property type="project" value="GO_Central"/>
</dbReference>
<dbReference type="GO" id="GO:0046825">
    <property type="term" value="P:regulation of protein export from nucleus"/>
    <property type="evidence" value="ECO:0000314"/>
    <property type="project" value="ComplexPortal"/>
</dbReference>
<dbReference type="GO" id="GO:0034976">
    <property type="term" value="P:response to endoplasmic reticulum stress"/>
    <property type="evidence" value="ECO:0000314"/>
    <property type="project" value="UniProt"/>
</dbReference>
<dbReference type="GO" id="GO:0071109">
    <property type="term" value="P:superior temporal gyrus development"/>
    <property type="evidence" value="ECO:0000315"/>
    <property type="project" value="BHF-UCL"/>
</dbReference>
<dbReference type="GO" id="GO:0019082">
    <property type="term" value="P:viral protein processing"/>
    <property type="evidence" value="ECO:0000304"/>
    <property type="project" value="Reactome"/>
</dbReference>
<dbReference type="GO" id="GO:0016055">
    <property type="term" value="P:Wnt signaling pathway"/>
    <property type="evidence" value="ECO:0000315"/>
    <property type="project" value="BHF-UCL"/>
</dbReference>
<dbReference type="CDD" id="cd14137">
    <property type="entry name" value="STKc_GSK3"/>
    <property type="match status" value="1"/>
</dbReference>
<dbReference type="DisProt" id="DP00385"/>
<dbReference type="FunFam" id="1.10.510.10:FF:000055">
    <property type="entry name" value="Glycogen synthase kinase-3 beta"/>
    <property type="match status" value="1"/>
</dbReference>
<dbReference type="FunFam" id="3.30.200.20:FF:000009">
    <property type="entry name" value="Glycogen synthase kinase-3 beta"/>
    <property type="match status" value="1"/>
</dbReference>
<dbReference type="Gene3D" id="3.30.200.20">
    <property type="entry name" value="Phosphorylase Kinase, domain 1"/>
    <property type="match status" value="1"/>
</dbReference>
<dbReference type="Gene3D" id="1.10.510.10">
    <property type="entry name" value="Transferase(Phosphotransferase) domain 1"/>
    <property type="match status" value="1"/>
</dbReference>
<dbReference type="IDEAL" id="IID00052"/>
<dbReference type="InterPro" id="IPR050591">
    <property type="entry name" value="GSK-3"/>
</dbReference>
<dbReference type="InterPro" id="IPR011009">
    <property type="entry name" value="Kinase-like_dom_sf"/>
</dbReference>
<dbReference type="InterPro" id="IPR000719">
    <property type="entry name" value="Prot_kinase_dom"/>
</dbReference>
<dbReference type="InterPro" id="IPR017441">
    <property type="entry name" value="Protein_kinase_ATP_BS"/>
</dbReference>
<dbReference type="InterPro" id="IPR008271">
    <property type="entry name" value="Ser/Thr_kinase_AS"/>
</dbReference>
<dbReference type="InterPro" id="IPR039192">
    <property type="entry name" value="STKc_GSK3"/>
</dbReference>
<dbReference type="PANTHER" id="PTHR24057">
    <property type="entry name" value="GLYCOGEN SYNTHASE KINASE-3 ALPHA"/>
    <property type="match status" value="1"/>
</dbReference>
<dbReference type="PANTHER" id="PTHR24057:SF8">
    <property type="entry name" value="GLYCOGEN SYNTHASE KINASE-3 BETA"/>
    <property type="match status" value="1"/>
</dbReference>
<dbReference type="Pfam" id="PF00069">
    <property type="entry name" value="Pkinase"/>
    <property type="match status" value="1"/>
</dbReference>
<dbReference type="SMART" id="SM00220">
    <property type="entry name" value="S_TKc"/>
    <property type="match status" value="1"/>
</dbReference>
<dbReference type="SUPFAM" id="SSF56112">
    <property type="entry name" value="Protein kinase-like (PK-like)"/>
    <property type="match status" value="1"/>
</dbReference>
<dbReference type="PROSITE" id="PS00107">
    <property type="entry name" value="PROTEIN_KINASE_ATP"/>
    <property type="match status" value="1"/>
</dbReference>
<dbReference type="PROSITE" id="PS50011">
    <property type="entry name" value="PROTEIN_KINASE_DOM"/>
    <property type="match status" value="1"/>
</dbReference>
<dbReference type="PROSITE" id="PS00108">
    <property type="entry name" value="PROTEIN_KINASE_ST"/>
    <property type="match status" value="1"/>
</dbReference>
<feature type="chain" id="PRO_0000085980" description="Glycogen synthase kinase-3 beta">
    <location>
        <begin position="1"/>
        <end position="420"/>
    </location>
</feature>
<feature type="domain" description="Protein kinase" evidence="3">
    <location>
        <begin position="56"/>
        <end position="340"/>
    </location>
</feature>
<feature type="region of interest" description="Disordered" evidence="4">
    <location>
        <begin position="1"/>
        <end position="53"/>
    </location>
</feature>
<feature type="region of interest" description="Disordered" evidence="4">
    <location>
        <begin position="386"/>
        <end position="420"/>
    </location>
</feature>
<feature type="compositionally biased region" description="Polar residues" evidence="4">
    <location>
        <begin position="1"/>
        <end position="22"/>
    </location>
</feature>
<feature type="compositionally biased region" description="Low complexity" evidence="4">
    <location>
        <begin position="386"/>
        <end position="401"/>
    </location>
</feature>
<feature type="compositionally biased region" description="Low complexity" evidence="4">
    <location>
        <begin position="409"/>
        <end position="420"/>
    </location>
</feature>
<feature type="active site" description="Proton acceptor">
    <location>
        <position position="181"/>
    </location>
</feature>
<feature type="binding site" evidence="3">
    <location>
        <begin position="62"/>
        <end position="70"/>
    </location>
    <ligand>
        <name>ATP</name>
        <dbReference type="ChEBI" id="CHEBI:30616"/>
    </ligand>
</feature>
<feature type="binding site" evidence="3 60">
    <location>
        <position position="85"/>
    </location>
    <ligand>
        <name>ATP</name>
        <dbReference type="ChEBI" id="CHEBI:30616"/>
    </ligand>
</feature>
<feature type="modified residue" description="Phosphoserine; by PKB/AKT1, RPS6KA3 and SGK3" evidence="8 15 30 36 37 49 51">
    <location>
        <position position="9"/>
    </location>
</feature>
<feature type="modified residue" description="Phosphotyrosine" evidence="9 37">
    <location>
        <position position="216"/>
    </location>
</feature>
<feature type="modified residue" description="Phosphoserine" evidence="2">
    <location>
        <position position="389"/>
    </location>
</feature>
<feature type="modified residue" description="Phosphothreonine" evidence="64 66">
    <location>
        <position position="390"/>
    </location>
</feature>
<feature type="modified residue" description="Phosphothreonine" evidence="65">
    <location>
        <position position="402"/>
    </location>
</feature>
<feature type="lipid moiety-binding region" description="S-palmitoyl cysteine" evidence="49">
    <location>
        <position position="14"/>
    </location>
</feature>
<feature type="splice variant" id="VSP_004790" description="In isoform 2." evidence="57">
    <original>K</original>
    <variation>KDSSGTGHFTSGVR</variation>
    <location>
        <position position="303"/>
    </location>
</feature>
<feature type="mutagenesis site" description="Loss of phosphorylation; abolished inhibition of activity, leading to constitutively active." evidence="17 44 50">
    <original>S</original>
    <variation>A</variation>
    <location>
        <position position="9"/>
    </location>
</feature>
<feature type="mutagenesis site" description="Significantly reduced palmitoylation." evidence="49">
    <original>C</original>
    <variation>A</variation>
    <location>
        <position position="14"/>
    </location>
</feature>
<feature type="mutagenesis site" description="Abolished serine/threonine-protein kinase activity." evidence="17">
    <original>KK</original>
    <variation>AA</variation>
    <location>
        <begin position="85"/>
        <end position="86"/>
    </location>
</feature>
<feature type="mutagenesis site" description="Prevents the phosphorylation of phosphate-primed glycogen synthase." evidence="6">
    <original>R</original>
    <variation>A</variation>
    <location>
        <position position="96"/>
    </location>
</feature>
<feature type="mutagenesis site" description="Abolishes activity toward AXIN1." evidence="6">
    <original>L</original>
    <variation>A</variation>
    <location>
        <position position="128"/>
    </location>
</feature>
<feature type="sequence conflict" description="In Ref. 4; AAD48517." evidence="58" ref="4">
    <original>V</original>
    <variation>G</variation>
    <location>
        <position position="28"/>
    </location>
</feature>
<feature type="sequence conflict" description="In Ref. 1; AAA66475." evidence="58" ref="1">
    <original>L</original>
    <variation>H</variation>
    <location>
        <position position="350"/>
    </location>
</feature>
<feature type="strand" evidence="70">
    <location>
        <begin position="10"/>
        <end position="12"/>
    </location>
</feature>
<feature type="strand" evidence="67">
    <location>
        <begin position="26"/>
        <end position="30"/>
    </location>
</feature>
<feature type="strand" evidence="72">
    <location>
        <begin position="32"/>
        <end position="34"/>
    </location>
</feature>
<feature type="strand" evidence="67">
    <location>
        <begin position="38"/>
        <end position="48"/>
    </location>
</feature>
<feature type="strand" evidence="67">
    <location>
        <begin position="52"/>
        <end position="64"/>
    </location>
</feature>
<feature type="strand" evidence="67">
    <location>
        <begin position="66"/>
        <end position="75"/>
    </location>
</feature>
<feature type="turn" evidence="67">
    <location>
        <begin position="76"/>
        <end position="78"/>
    </location>
</feature>
<feature type="strand" evidence="67">
    <location>
        <begin position="81"/>
        <end position="88"/>
    </location>
</feature>
<feature type="strand" evidence="68">
    <location>
        <begin position="91"/>
        <end position="93"/>
    </location>
</feature>
<feature type="helix" evidence="67">
    <location>
        <begin position="96"/>
        <end position="102"/>
    </location>
</feature>
<feature type="strand" evidence="67">
    <location>
        <begin position="112"/>
        <end position="120"/>
    </location>
</feature>
<feature type="turn" evidence="67">
    <location>
        <begin position="121"/>
        <end position="124"/>
    </location>
</feature>
<feature type="strand" evidence="67">
    <location>
        <begin position="125"/>
        <end position="133"/>
    </location>
</feature>
<feature type="strand" evidence="75">
    <location>
        <begin position="136"/>
        <end position="138"/>
    </location>
</feature>
<feature type="helix" evidence="67">
    <location>
        <begin position="139"/>
        <end position="148"/>
    </location>
</feature>
<feature type="helix" evidence="67">
    <location>
        <begin position="155"/>
        <end position="173"/>
    </location>
</feature>
<feature type="turn" evidence="67">
    <location>
        <begin position="174"/>
        <end position="176"/>
    </location>
</feature>
<feature type="helix" evidence="67">
    <location>
        <begin position="184"/>
        <end position="186"/>
    </location>
</feature>
<feature type="strand" evidence="67">
    <location>
        <begin position="187"/>
        <end position="190"/>
    </location>
</feature>
<feature type="turn" evidence="67">
    <location>
        <begin position="191"/>
        <end position="194"/>
    </location>
</feature>
<feature type="strand" evidence="67">
    <location>
        <begin position="195"/>
        <end position="198"/>
    </location>
</feature>
<feature type="helix" evidence="75">
    <location>
        <begin position="201"/>
        <end position="203"/>
    </location>
</feature>
<feature type="strand" evidence="73">
    <location>
        <begin position="209"/>
        <end position="211"/>
    </location>
</feature>
<feature type="helix" evidence="75">
    <location>
        <begin position="220"/>
        <end position="222"/>
    </location>
</feature>
<feature type="helix" evidence="67">
    <location>
        <begin position="225"/>
        <end position="228"/>
    </location>
</feature>
<feature type="helix" evidence="67">
    <location>
        <begin position="237"/>
        <end position="252"/>
    </location>
</feature>
<feature type="helix" evidence="67">
    <location>
        <begin position="262"/>
        <end position="273"/>
    </location>
</feature>
<feature type="helix" evidence="67">
    <location>
        <begin position="278"/>
        <end position="284"/>
    </location>
</feature>
<feature type="helix" evidence="74">
    <location>
        <begin position="286"/>
        <end position="288"/>
    </location>
</feature>
<feature type="strand" evidence="71">
    <location>
        <begin position="289"/>
        <end position="291"/>
    </location>
</feature>
<feature type="helix" evidence="67">
    <location>
        <begin position="301"/>
        <end position="304"/>
    </location>
</feature>
<feature type="helix" evidence="67">
    <location>
        <begin position="311"/>
        <end position="320"/>
    </location>
</feature>
<feature type="helix" evidence="67">
    <location>
        <begin position="325"/>
        <end position="327"/>
    </location>
</feature>
<feature type="helix" evidence="67">
    <location>
        <begin position="331"/>
        <end position="335"/>
    </location>
</feature>
<feature type="helix" evidence="67">
    <location>
        <begin position="338"/>
        <end position="344"/>
    </location>
</feature>
<feature type="strand" evidence="69">
    <location>
        <begin position="345"/>
        <end position="347"/>
    </location>
</feature>
<feature type="strand" evidence="73">
    <location>
        <begin position="353"/>
        <end position="355"/>
    </location>
</feature>
<feature type="helix" evidence="67">
    <location>
        <begin position="364"/>
        <end position="367"/>
    </location>
</feature>
<feature type="helix" evidence="67">
    <location>
        <begin position="371"/>
        <end position="373"/>
    </location>
</feature>
<feature type="helix" evidence="67">
    <location>
        <begin position="374"/>
        <end position="377"/>
    </location>
</feature>
<feature type="turn" evidence="67">
    <location>
        <begin position="380"/>
        <end position="383"/>
    </location>
</feature>
<comment type="function">
    <text evidence="1 2 6 9 10 11 12 15 17 19 20 21 25 27 29 30 32 33 36 38 39 43 44 45 46 52 54 56">Constitutively active protein kinase that acts as a negative regulator in the hormonal control of glucose homeostasis, Wnt signaling and regulation of transcription factors and microtubules, by phosphorylating and inactivating glycogen synthase (GYS1 or GYS2), EIF2B, CTNNB1/beta-catenin, APC, AXIN1, DPYSL2/CRMP2, JUN, NFATC1/NFATC, MAPT/TAU and MACF1 (PubMed:11430833, PubMed:12554650, PubMed:14690523, PubMed:16484495, PubMed:1846781, PubMed:20937854, PubMed:9072970). Requires primed phosphorylation of the majority of its substrates (PubMed:11430833, PubMed:16484495). In skeletal muscle, contributes to insulin regulation of glycogen synthesis by phosphorylating and inhibiting GYS1 activity and hence glycogen synthesis (PubMed:8397507). May also mediate the development of insulin resistance by regulating activation of transcription factors (PubMed:8397507). Regulates protein synthesis by controlling the activity of initiation factor 2B (EIF2BE/EIF2B5) in the same manner as glycogen synthase (PubMed:8397507). In Wnt signaling, GSK3B forms a multimeric complex with APC, AXIN1 and CTNNB1/beta-catenin and phosphorylates the N-terminus of CTNNB1 leading to its degradation mediated by ubiquitin/proteasomes (PubMed:12554650). Phosphorylates JUN at sites proximal to its DNA-binding domain, thereby reducing its affinity for DNA (PubMed:1846781). Phosphorylates NFATC1/NFATC on conserved serine residues promoting NFATC1/NFATC nuclear export, shutting off NFATC1/NFATC gene regulation, and thereby opposing the action of calcineurin (PubMed:9072970). Phosphorylates MAPT/TAU on 'Thr-548', decreasing significantly MAPT/TAU ability to bind and stabilize microtubules (PubMed:14690523). MAPT/TAU is the principal component of neurofibrillary tangles in Alzheimer disease (PubMed:14690523). Plays an important role in ERBB2-dependent stabilization of microtubules at the cell cortex (PubMed:20937854). Phosphorylates MACF1, inhibiting its binding to microtubules which is critical for its role in bulge stem cell migration and skin wound repair (By similarity). Probably regulates NF-kappa-B (NFKB1) at the transcriptional level and is required for the NF-kappa-B-mediated anti-apoptotic response to TNF-alpha (TNF/TNFA) (By similarity). Negatively regulates replication in pancreatic beta-cells, resulting in apoptosis, loss of beta-cells and diabetes (By similarity). Through phosphorylation of the anti-apoptotic protein MCL1, may control cell apoptosis in response to growth factors deprivation (By similarity). Phosphorylates MUC1 in breast cancer cells, decreasing the interaction of MUC1 with CTNNB1/beta-catenin (PubMed:9819408). Is necessary for the establishment of neuronal polarity and axon outgrowth (PubMed:20067585). Phosphorylates MARK2, leading to inhibition of its activity (By similarity). Phosphorylates SIK1 at 'Thr-182', leading to sustainment of its activity (PubMed:18348280). Phosphorylates ZC3HAV1 which enhances its antiviral activity (PubMed:22514281). Phosphorylates SNAI1, leading to its ubiquitination and proteasomal degradation (PubMed:15448698, PubMed:15647282, PubMed:25827072, PubMed:29059170). Phosphorylates SFPQ at 'Thr-687' upon T-cell activation (PubMed:20932480). Phosphorylates NR1D1 st 'Ser-55' and 'Ser-59' and stabilizes it by protecting it from proteasomal degradation. Regulates the circadian clock via phosphorylation of the major clock components including BMAL1, CLOCK and PER2 (PubMed:19946213, PubMed:28903391). Phosphorylates FBXL2 at 'Thr-404' and primes it for ubiquitination by the SCF(FBXO3) complex and proteasomal degradation (By similarity). Phosphorylates CLOCK AT 'Ser-427' and targets it for proteasomal degradation (PubMed:19946213). Phosphorylates BMAL1 at 'Ser-17' and 'Ser-21' and primes it for ubiquitination and proteasomal degradation (PubMed:28903391). Phosphorylates OGT at 'Ser-3' or 'Ser-4' which positively regulates its activity. Phosphorylates MYCN in neuroblastoma cells which may promote its degradation (PubMed:24391509). Regulates the circadian rhythmicity of hippocampal long-term potentiation and BMAL1 and PER2 expression (By similarity). Acts as a regulator of autophagy by mediating phosphorylation of KAT5/TIP60 under starvation conditions, activating KAT5/TIP60 acetyltransferase activity and promoting acetylation of key autophagy regulators, such as ULK1 and RUBCNL/Pacer (PubMed:30704899). Negatively regulates extrinsic apoptotic signaling pathway via death domain receptors. Promotes the formation of an anti-apoptotic complex, made of DDX3X, BRIC2 and GSK3B, at death receptors, including TNFRSF10B. The anti-apoptotic function is most effective with weak apoptotic signals and can be overcome by stronger stimulation (PubMed:18846110). Phosphorylates E2F1, promoting the interaction between E2F1 and USP11, stabilizing E2F1 and promoting its activity (PubMed:17050006, PubMed:28992046). Phosphorylates mTORC2 complex component RICTOR at 'Ser-1235' in response to endoplasmic stress, inhibiting mTORC2 (PubMed:21343617). Phosphorylates mTORC2 complex component RICTOR at 'Thr-1695' which facilitates FBXW7-mediated ubiquitination and subsequent degradation of RICTOR (PubMed:25897075). Phosphorylates FXR1, promoting FXR1 ubiquitination by the SCF(FBXO4) complex and FXR1 degradation by the proteasome (By similarity). Phosphorylates interleukin-22 receptor subunit IL22RA1, preventing its proteasomal degradation (By similarity).</text>
</comment>
<comment type="catalytic activity">
    <reaction evidence="10">
        <text>L-seryl-[tau protein] + ATP = O-phospho-L-seryl-[tau protein] + ADP + H(+)</text>
        <dbReference type="Rhea" id="RHEA:12801"/>
        <dbReference type="Rhea" id="RHEA-COMP:13701"/>
        <dbReference type="Rhea" id="RHEA-COMP:13702"/>
        <dbReference type="ChEBI" id="CHEBI:15378"/>
        <dbReference type="ChEBI" id="CHEBI:29999"/>
        <dbReference type="ChEBI" id="CHEBI:30616"/>
        <dbReference type="ChEBI" id="CHEBI:83421"/>
        <dbReference type="ChEBI" id="CHEBI:456216"/>
        <dbReference type="EC" id="2.7.11.26"/>
    </reaction>
</comment>
<comment type="catalytic activity">
    <reaction evidence="10">
        <text>L-threonyl-[tau protein] + ATP = O-phospho-L-threonyl-[tau protein] + ADP + H(+)</text>
        <dbReference type="Rhea" id="RHEA:53904"/>
        <dbReference type="Rhea" id="RHEA-COMP:13703"/>
        <dbReference type="Rhea" id="RHEA-COMP:13704"/>
        <dbReference type="ChEBI" id="CHEBI:15378"/>
        <dbReference type="ChEBI" id="CHEBI:30013"/>
        <dbReference type="ChEBI" id="CHEBI:30616"/>
        <dbReference type="ChEBI" id="CHEBI:61977"/>
        <dbReference type="ChEBI" id="CHEBI:456216"/>
        <dbReference type="EC" id="2.7.11.26"/>
    </reaction>
</comment>
<comment type="catalytic activity">
    <reaction evidence="17 32 34 38 44 45">
        <text>L-seryl-[protein] + ATP = O-phospho-L-seryl-[protein] + ADP + H(+)</text>
        <dbReference type="Rhea" id="RHEA:17989"/>
        <dbReference type="Rhea" id="RHEA-COMP:9863"/>
        <dbReference type="Rhea" id="RHEA-COMP:11604"/>
        <dbReference type="ChEBI" id="CHEBI:15378"/>
        <dbReference type="ChEBI" id="CHEBI:29999"/>
        <dbReference type="ChEBI" id="CHEBI:30616"/>
        <dbReference type="ChEBI" id="CHEBI:83421"/>
        <dbReference type="ChEBI" id="CHEBI:456216"/>
        <dbReference type="EC" id="2.7.11.1"/>
    </reaction>
</comment>
<comment type="catalytic activity">
    <reaction evidence="17">
        <text>L-threonyl-[protein] + ATP = O-phospho-L-threonyl-[protein] + ADP + H(+)</text>
        <dbReference type="Rhea" id="RHEA:46608"/>
        <dbReference type="Rhea" id="RHEA-COMP:11060"/>
        <dbReference type="Rhea" id="RHEA-COMP:11605"/>
        <dbReference type="ChEBI" id="CHEBI:15378"/>
        <dbReference type="ChEBI" id="CHEBI:30013"/>
        <dbReference type="ChEBI" id="CHEBI:30616"/>
        <dbReference type="ChEBI" id="CHEBI:61977"/>
        <dbReference type="ChEBI" id="CHEBI:456216"/>
        <dbReference type="EC" id="2.7.11.1"/>
    </reaction>
</comment>
<comment type="activity regulation">
    <text evidence="2 7 9 22 53">Activated by phosphorylation at Tyr-216. In response to insulin, inhibited by phosphorylation at Ser-9 by PKB/AKT1 and RPS6KA3; phosphorylation at this site causes a conformational change, preventing access of substrates to the active site. Inhibited by IL22 treatment which also triggers phosphorylation at Ser-9, promoting inactivation (By similarity). Inhibited by lithium.</text>
</comment>
<comment type="subunit">
    <text evidence="1 2 5 8 9 11 12 13 14 16 18 21 23 24 25 26 28 36 37 39 40 41 42 43 47 48 55 56">Monomer. Interacts with ARRB2, DISC1 and ZBED3 (By similarity). Interacts with CABYR, MMP2, MUC1, NIN and PRUNE1. Interacts with AXIN1; the interaction mediates hyperphosphorylation of CTNNB1 leading to its ubiquitination and destruction. Interacts with and phosphorylates SNAI1. Interacts with DNM1L (via a C-terminal domain). Found in a complex composed of MACF1, APC, AXIN1, CTNNB1 and GSK3B (By similarity). Interacts with SGK3. Interacts with DAB2IP (via C2 domain); the interaction stimulates GSK3B kinase activation. Interacts (via C2 domain) with PPP2CA. Interacts with the CLOCK-BMAL1 heterodimer (PubMed:19946213). Interacts with the BMAL1 (PubMed:28903391). Interacts with CTNND2 (PubMed:19706605). Interacts with NCYM (PubMed:24391509). The complex composed, at least, of APC, CTNNB1 and GSK3B interacts with JPT1; the interaction requires the inactive form of GSK3B (phosphorylated at 'Ser-9') (PubMed:25169422). Forms a complex composed of PRKAR2A or PRKAR2B, GSK3B and GSKIP through GSKIP interaction; facilitates PKA-induced phosphorylation and regulates GSK3B activity (PubMed:20007971, PubMed:25920809, PubMed:27484798). Interacts with GSKIP (PubMed:16981698). Interacts with GID8 (PubMed:28829046). Interacts with PIWIL2 (By similarity). Interacts with LMBR1L (PubMed:31073040). Interacts with DDX3X (PubMed:18846110). Interacts with BIRC2 (PubMed:18846110). Interacts with TNFRSF10B; TNFRSF10B stimulation inhibits GSK3B kinase activity (PubMed:18846110). Interacts with RICTOR; the interaction results in phosphorylation of RICTOR at 'Thr-1695' by GSK3B which facilitates FBXW7-mediated ubiquitination and subsequent degradation of RICTOR (PubMed:25897075). Found in a complex with SLC39A6, SLC39A10 and with GSK3B that controls NCAM1 phosphorylation (By similarity). Interacts with PKP3 (via ARM repeats); the interaction may be involved in PKP3 protein degradation (PubMed:34058472).</text>
</comment>
<comment type="interaction">
    <interactant intactId="EBI-373586">
        <id>P49841</id>
    </interactant>
    <interactant intactId="EBI-296087">
        <id>P31749</id>
        <label>AKT1</label>
    </interactant>
    <organismsDiffer>false</organismsDiffer>
    <experiments>4</experiments>
</comment>
<comment type="interaction">
    <interactant intactId="EBI-373586">
        <id>P49841</id>
    </interactant>
    <interactant intactId="EBI-296058">
        <id>P31751</id>
        <label>AKT2</label>
    </interactant>
    <organismsDiffer>false</organismsDiffer>
    <experiments>2</experiments>
</comment>
<comment type="interaction">
    <interactant intactId="EBI-373586">
        <id>P49841</id>
    </interactant>
    <interactant intactId="EBI-2431589">
        <id>PRO_0000000093</id>
        <label>APP</label>
        <dbReference type="UniProtKB" id="P05067"/>
    </interactant>
    <organismsDiffer>false</organismsDiffer>
    <experiments>2</experiments>
</comment>
<comment type="interaction">
    <interactant intactId="EBI-373586">
        <id>P49841</id>
    </interactant>
    <interactant intactId="EBI-710484">
        <id>O15169</id>
        <label>AXIN1</label>
    </interactant>
    <organismsDiffer>false</organismsDiffer>
    <experiments>52</experiments>
</comment>
<comment type="interaction">
    <interactant intactId="EBI-373586">
        <id>P49841</id>
    </interactant>
    <interactant intactId="EBI-4400025">
        <id>Q9Y2T1</id>
        <label>AXIN2</label>
    </interactant>
    <organismsDiffer>false</organismsDiffer>
    <experiments>6</experiments>
</comment>
<comment type="interaction">
    <interactant intactId="EBI-373586">
        <id>P49841</id>
    </interactant>
    <interactant intactId="EBI-1104509">
        <id>Q96G01</id>
        <label>BICD1</label>
    </interactant>
    <organismsDiffer>false</organismsDiffer>
    <experiments>7</experiments>
</comment>
<comment type="interaction">
    <interactant intactId="EBI-373586">
        <id>P49841</id>
    </interactant>
    <interactant intactId="EBI-10900795">
        <id>O75952-3</id>
        <label>CABYR</label>
    </interactant>
    <organismsDiffer>false</organismsDiffer>
    <experiments>3</experiments>
</comment>
<comment type="interaction">
    <interactant intactId="EBI-373586">
        <id>P49841</id>
    </interactant>
    <interactant intactId="EBI-10898671">
        <id>O75952-5</id>
        <label>CABYR</label>
    </interactant>
    <organismsDiffer>false</organismsDiffer>
    <experiments>3</experiments>
</comment>
<comment type="interaction">
    <interactant intactId="EBI-373586">
        <id>P49841</id>
    </interactant>
    <interactant intactId="EBI-491549">
        <id>P35222</id>
        <label>CTNNB1</label>
    </interactant>
    <organismsDiffer>false</organismsDiffer>
    <experiments>20</experiments>
</comment>
<comment type="interaction">
    <interactant intactId="EBI-373586">
        <id>P49841</id>
    </interactant>
    <interactant intactId="EBI-2871881">
        <id>Q5VWQ8</id>
        <label>DAB2IP</label>
    </interactant>
    <organismsDiffer>false</organismsDiffer>
    <experiments>2</experiments>
</comment>
<comment type="interaction">
    <interactant intactId="EBI-373586">
        <id>P49841</id>
    </interactant>
    <interactant intactId="EBI-9543020">
        <id>Q5VWQ8-2</id>
        <label>DAB2IP</label>
    </interactant>
    <organismsDiffer>false</organismsDiffer>
    <experiments>2</experiments>
</comment>
<comment type="interaction">
    <interactant intactId="EBI-373586">
        <id>P49841</id>
    </interactant>
    <interactant intactId="EBI-3951744">
        <id>Q9NYF0</id>
        <label>DACT1</label>
    </interactant>
    <organismsDiffer>false</organismsDiffer>
    <experiments>3</experiments>
</comment>
<comment type="interaction">
    <interactant intactId="EBI-373586">
        <id>P49841</id>
    </interactant>
    <interactant intactId="EBI-718185">
        <id>O75398</id>
        <label>DEAF1</label>
    </interactant>
    <organismsDiffer>false</organismsDiffer>
    <experiments>2</experiments>
</comment>
<comment type="interaction">
    <interactant intactId="EBI-373586">
        <id>P49841</id>
    </interactant>
    <interactant intactId="EBI-4401110">
        <id>Q13144</id>
        <label>EIF2B5</label>
    </interactant>
    <organismsDiffer>false</organismsDiffer>
    <experiments>2</experiments>
</comment>
<comment type="interaction">
    <interactant intactId="EBI-373586">
        <id>P49841</id>
    </interactant>
    <interactant intactId="EBI-3934879">
        <id>Q92837</id>
        <label>FRAT1</label>
    </interactant>
    <organismsDiffer>false</organismsDiffer>
    <experiments>5</experiments>
</comment>
<comment type="interaction">
    <interactant intactId="EBI-373586">
        <id>P49841</id>
    </interactant>
    <interactant intactId="EBI-740553">
        <id>P13807</id>
        <label>GYS1</label>
    </interactant>
    <organismsDiffer>false</organismsDiffer>
    <experiments>4</experiments>
</comment>
<comment type="interaction">
    <interactant intactId="EBI-373586">
        <id>P49841</id>
    </interactant>
    <interactant intactId="EBI-910915">
        <id>O75581</id>
        <label>LRP6</label>
    </interactant>
    <organismsDiffer>false</organismsDiffer>
    <experiments>4</experiments>
</comment>
<comment type="interaction">
    <interactant intactId="EBI-373586">
        <id>P49841</id>
    </interactant>
    <interactant intactId="EBI-5323863">
        <id>Q5S007</id>
        <label>LRRK2</label>
    </interactant>
    <organismsDiffer>false</organismsDiffer>
    <experiments>7</experiments>
</comment>
<comment type="interaction">
    <interactant intactId="EBI-373586">
        <id>P49841</id>
    </interactant>
    <interactant intactId="EBI-366182">
        <id>P10636</id>
        <label>MAPT</label>
    </interactant>
    <organismsDiffer>false</organismsDiffer>
    <experiments>4</experiments>
</comment>
<comment type="interaction">
    <interactant intactId="EBI-373586">
        <id>P49841</id>
    </interactant>
    <interactant intactId="EBI-366233">
        <id>P10636-8</id>
        <label>MAPT</label>
    </interactant>
    <organismsDiffer>false</organismsDiffer>
    <experiments>12</experiments>
</comment>
<comment type="interaction">
    <interactant intactId="EBI-373586">
        <id>P49841</id>
    </interactant>
    <interactant intactId="EBI-742698">
        <id>Q14596</id>
        <label>NBR1</label>
    </interactant>
    <organismsDiffer>false</organismsDiffer>
    <experiments>4</experiments>
</comment>
<comment type="interaction">
    <interactant intactId="EBI-373586">
        <id>P49841</id>
    </interactant>
    <interactant intactId="EBI-1164022">
        <id>Q8N4C6</id>
        <label>NIN</label>
    </interactant>
    <organismsDiffer>false</organismsDiffer>
    <experiments>3</experiments>
</comment>
<comment type="interaction">
    <interactant intactId="EBI-373586">
        <id>P49841</id>
    </interactant>
    <interactant intactId="EBI-476586">
        <id>P17612</id>
        <label>PRKACA</label>
    </interactant>
    <organismsDiffer>false</organismsDiffer>
    <experiments>7</experiments>
</comment>
<comment type="interaction">
    <interactant intactId="EBI-373586">
        <id>P49841</id>
    </interactant>
    <interactant intactId="EBI-357837">
        <id>Q01201</id>
        <label>RELB</label>
    </interactant>
    <organismsDiffer>false</organismsDiffer>
    <experiments>4</experiments>
</comment>
<comment type="interaction">
    <interactant intactId="EBI-373586">
        <id>P49841</id>
    </interactant>
    <interactant intactId="EBI-1045459">
        <id>O95863</id>
        <label>SNAI1</label>
    </interactant>
    <organismsDiffer>false</organismsDiffer>
    <experiments>5</experiments>
</comment>
<comment type="interaction">
    <interactant intactId="EBI-373586">
        <id>P49841</id>
    </interactant>
    <interactant intactId="EBI-985879">
        <id>P37840</id>
        <label>SNCA</label>
    </interactant>
    <organismsDiffer>false</organismsDiffer>
    <experiments>2</experiments>
</comment>
<comment type="interaction">
    <interactant intactId="EBI-373586">
        <id>P49841</id>
    </interactant>
    <interactant intactId="EBI-6424915">
        <id>Q6J9G0</id>
        <label>STYK1</label>
    </interactant>
    <organismsDiffer>false</organismsDiffer>
    <experiments>2</experiments>
</comment>
<comment type="interaction">
    <interactant intactId="EBI-373586">
        <id>P49841</id>
    </interactant>
    <interactant intactId="EBI-366083">
        <id>P04637</id>
        <label>TP53</label>
    </interactant>
    <organismsDiffer>false</organismsDiffer>
    <experiments>3</experiments>
</comment>
<comment type="interaction">
    <interactant intactId="EBI-373586">
        <id>P49841</id>
    </interactant>
    <interactant intactId="EBI-702370">
        <id>Q14134</id>
        <label>TRIM29</label>
    </interactant>
    <organismsDiffer>false</organismsDiffer>
    <experiments>2</experiments>
</comment>
<comment type="interaction">
    <interactant intactId="EBI-373586">
        <id>P49841</id>
    </interactant>
    <interactant intactId="EBI-358329">
        <id>O95071</id>
        <label>UBR5</label>
    </interactant>
    <organismsDiffer>false</organismsDiffer>
    <experiments>8</experiments>
</comment>
<comment type="interaction">
    <interactant intactId="EBI-373586">
        <id>P49841</id>
    </interactant>
    <interactant intactId="EBI-347088">
        <id>P63104</id>
        <label>YWHAZ</label>
    </interactant>
    <organismsDiffer>false</organismsDiffer>
    <experiments>4</experiments>
</comment>
<comment type="interaction">
    <interactant intactId="EBI-373586">
        <id>P49841</id>
    </interactant>
    <interactant intactId="EBI-3942619">
        <id>Q8IX07</id>
        <label>ZFPM1</label>
    </interactant>
    <organismsDiffer>false</organismsDiffer>
    <experiments>2</experiments>
</comment>
<comment type="interaction">
    <interactant intactId="EBI-373586">
        <id>P49841</id>
    </interactant>
    <interactant intactId="EBI-2365912">
        <id>O35625</id>
        <label>Axin1</label>
    </interactant>
    <organismsDiffer>true</organismsDiffer>
    <experiments>5</experiments>
</comment>
<comment type="interaction">
    <interactant intactId="EBI-373586">
        <id>P49841</id>
    </interactant>
    <interactant intactId="EBI-4312125">
        <id>Q14DJ8</id>
        <label>Axin1</label>
    </interactant>
    <organismsDiffer>true</organismsDiffer>
    <experiments>2</experiments>
</comment>
<comment type="interaction">
    <interactant intactId="EBI-373586">
        <id>P49841</id>
    </interactant>
    <interactant intactId="EBI-397872">
        <id>Q02248</id>
        <label>Ctnnb1</label>
    </interactant>
    <organismsDiffer>true</organismsDiffer>
    <experiments>3</experiments>
</comment>
<comment type="interaction">
    <interactant intactId="EBI-373586">
        <id>P49841</id>
    </interactant>
    <interactant intactId="EBI-2298259">
        <id>Q811T9</id>
        <label>Disc1</label>
    </interactant>
    <organismsDiffer>true</organismsDiffer>
    <experiments>4</experiments>
</comment>
<comment type="interaction">
    <interactant intactId="EBI-373586">
        <id>P49841</id>
    </interactant>
    <interactant intactId="EBI-397697">
        <id>P63085</id>
        <label>Mapk1</label>
    </interactant>
    <organismsDiffer>true</organismsDiffer>
    <experiments>2</experiments>
</comment>
<comment type="interaction">
    <interactant intactId="EBI-373586">
        <id>P49841</id>
    </interactant>
    <interactant intactId="EBI-25475856">
        <id>P0DTC9</id>
        <label>N</label>
    </interactant>
    <organismsDiffer>true</organismsDiffer>
    <experiments>3</experiments>
</comment>
<comment type="interaction">
    <interactant intactId="EBI-15870655">
        <id>P49841-2</id>
    </interactant>
    <interactant intactId="EBI-77613">
        <id>P05067</id>
        <label>APP</label>
    </interactant>
    <organismsDiffer>false</organismsDiffer>
    <experiments>3</experiments>
</comment>
<comment type="interaction">
    <interactant intactId="EBI-15870655">
        <id>P49841-2</id>
    </interactant>
    <interactant intactId="EBI-400434">
        <id>P35637</id>
        <label>FUS</label>
    </interactant>
    <organismsDiffer>false</organismsDiffer>
    <experiments>3</experiments>
</comment>
<comment type="interaction">
    <interactant intactId="EBI-15870655">
        <id>P49841-2</id>
    </interactant>
    <interactant intactId="EBI-447544">
        <id>P01106</id>
        <label>MYC</label>
    </interactant>
    <organismsDiffer>false</organismsDiffer>
    <experiments>3</experiments>
</comment>
<comment type="interaction">
    <interactant intactId="EBI-15870655">
        <id>P49841-2</id>
    </interactant>
    <interactant intactId="EBI-16153101">
        <id>Q8BMD2-1</id>
        <label>Dzip1</label>
    </interactant>
    <organismsDiffer>true</organismsDiffer>
    <experiments>3</experiments>
</comment>
<comment type="subcellular location">
    <subcellularLocation>
        <location evidence="31 37 49">Cytoplasm</location>
    </subcellularLocation>
    <subcellularLocation>
        <location evidence="11 31">Nucleus</location>
    </subcellularLocation>
    <subcellularLocation>
        <location evidence="30">Cell membrane</location>
    </subcellularLocation>
    <text evidence="30">The phosphorylated form shows localization to cytoplasm and cell membrane (PubMed:20937854). The MEMO1-RHOA-DIAPH1 signaling pathway controls localization of the phosphorylated form to the cell membrane (PubMed:20937854).</text>
</comment>
<comment type="alternative products">
    <event type="alternative splicing"/>
    <isoform>
        <id>P49841-1</id>
        <name>1</name>
        <name>GSK-3beta1</name>
        <sequence type="displayed"/>
    </isoform>
    <isoform>
        <id>P49841-2</id>
        <name>2</name>
        <name>GSK-3beta2</name>
        <name>neuron-specific</name>
        <sequence type="described" ref="VSP_004790"/>
    </isoform>
</comment>
<comment type="tissue specificity">
    <text evidence="31">Expressed in testis, thymus, prostate and ovary and weakly expressed in lung, brain and kidney. Colocalizes with EIF2AK2/PKR and TAU in the Alzheimer disease (AD) brain.</text>
</comment>
<comment type="PTM">
    <text evidence="2 8 9 15 30 31 37 51 62">Phosphorylated by AKT1 and ILK1. Upon insulin-mediated signaling, the activated PKB/AKT1 protein kinase phosphorylates and deactivates GSK3B, resulting in the dephosphorylation and activation of GYS1. Activated by phosphorylation at Tyr-216 (PubMed:25169422). Inactivated by phosphorylation at Ser-9 (Probable). Phosphorylated in a circadian manner in the hippocampus (By similarity).</text>
</comment>
<comment type="PTM">
    <text evidence="35">Mono-ADP-ribosylation by PARP10 negatively regulates kinase activity.</text>
</comment>
<comment type="PTM">
    <text evidence="49">Palmitoylated. Palmitoylation by ZDHHC4 prevents AKT1-mediated phosphorylation.</text>
</comment>
<comment type="miscellaneous">
    <text evidence="59 61">Higher expression and activity of GSK3B are found in the skeletal muscle (vastus lateralis) of patients with type 2 diabetes (PubMed:10868943). Several potent GSK3 (GSK3A and GSK3B) inhibitors have been identified and characterized in preclinical models for treatments of type 2 diabetes (PubMed:19366350).</text>
</comment>
<comment type="miscellaneous">
    <molecule>Isoform 2</molecule>
    <text evidence="27">May play a specific role in axon growth and neurite outgrowth. Reduced binding to AXIN1, reduced ability to phosphorylate MAPT/TAU.</text>
</comment>
<comment type="similarity">
    <text evidence="58">Belongs to the protein kinase superfamily. CMGC Ser/Thr protein kinase family. GSK-3 subfamily.</text>
</comment>
<comment type="online information" name="Atlas of Genetics and Cytogenetics in Oncology and Haematology">
    <link uri="https://atlasgeneticsoncology.org/gene/40761/GSK3B"/>
</comment>
<name>GSK3B_HUMAN</name>
<proteinExistence type="evidence at protein level"/>